<comment type="function">
    <molecule>Mature core protein</molecule>
    <text evidence="3 4 5 6 11 36 40">Packages viral RNA to form a viral nucleocapsid, and promotes virion budding (Probable). Participates in the viral particle production as a result of its interaction with the non-structural protein 5A (By similarity). Binds RNA and may function as a RNA chaperone to induce the RNA structural rearrangements taking place during virus replication (Probable). Modulates viral translation initiation by interacting with viral IRES and 40S ribosomal subunit (By similarity). Affects various cell signaling pathways, host immunity and lipid metabolism (Probable). Prevents the establishment of cellular antiviral state by blocking the interferon-alpha/beta (IFN-alpha/beta) and IFN-gamma signaling pathways and by blocking the formation of phosphorylated STAT1 and promoting ubiquitin-mediated proteasome-dependent degradation of STAT1 (By similarity). Activates STAT3 leading to cellular transformation (By similarity). Regulates the activity of cellular genes, including c-myc and c-fos (By similarity). May repress the promoter of p53, and sequester CREB3 and SP110 isoform 3/Sp110b in the cytoplasm (By similarity). Represses cell cycle negative regulating factor CDKN1A, thereby interrupting an important check point of normal cell cycle regulation (By similarity). Targets transcription factors involved in the regulation of inflammatory responses and in the immune response: suppresses NF-kappa-B activation, and activates AP-1 (By similarity). Binds to dendritic cells (DCs) via C1QR1, resulting in down-regulation of T-lymphocytes proliferation (By similarity). Alters lipid metabolism by interacting with hepatocellular proteins involved in lipid accumulation and storage (By similarity). Induces up-regulation of FAS promoter activity, and thereby contributes to the increased triglyceride accumulation in hepatocytes (steatosis) (By similarity).</text>
</comment>
<comment type="function">
    <molecule>Envelope glycoprotein E1</molecule>
    <text evidence="5">Forms a heterodimer with envelope glycoprotein E2, which mediates virus attachment to the host cell, virion internalization through clathrin-dependent endocytosis and fusion with host membrane (By similarity). Fusion with the host cell is most likely mediated by both E1 and E2, through conformational rearrangements of the heterodimer required for fusion rather than a classical class II fusion mechanism (By similarity). E1/E2 heterodimer binds host apolipoproteins such as APOB and APOE thereby forming a lipo-viro-particle (LVP) (By similarity). APOE associated to the LVP allows the initial virus attachment to cell surface receptors such as the heparan sulfate proteoglycans (HSPGs), syndecan-1 (SDC1), syndecan-1 (SDC2), the low-density lipoprotein receptor (LDLR) and scavenger receptor class B type I (SCARB1) (By similarity). The cholesterol transfer activity of SCARB1 allows E2 exposure and binding of E2 to SCARB1 and the tetraspanin CD81 (By similarity). E1/E2 heterodimer binding on CD81 activates the epithelial growth factor receptor (EGFR) signaling pathway (By similarity). Diffusion of the complex E1-E2-EGFR-SCARB1-CD81 to the cell lateral membrane allows further interaction with Claudin 1 (CLDN1) and occludin (OCLN) to finally trigger HCV entry (By similarity).</text>
</comment>
<comment type="function">
    <molecule>Envelope glycoprotein E2</molecule>
    <text evidence="4 5">Forms a heterodimer with envelope glycoprotein E1, which mediates virus attachment to the host cell, virion internalization through clathrin-dependent endocytosis and fusion with host membrane (By similarity). Fusion with the host cell is most likely mediated by both E1 and E2, through conformational rearrangements of the heterodimer required for fusion rather than a classical class II fusion mechanism (By similarity). The interaction between envelope glycoprotein E2 and host apolipoprotein E/APOE allows the proper assembly, maturation and infectivity of the viral particles (By similarity). This interaction is probably promoted via the up-regulation of cellular autophagy by the virus (By similarity). E1/E2 heterodimer binds host apolipoproteins such as APOB and APOE thereby forming a lipo-viro-particle (LVP) (By similarity). APOE associated to the LVP allows the initial virus attachment to cell surface receptors such as the heparan sulfate proteoglycans (HSPGs), syndecan-1 (SDC1), syndecan-1 (SDC2), the low-density lipoprotein receptor (LDLR) and scavenger receptor class B type I (SCARB1) (By similarity). The cholesterol transfer activity of SCARB1 allows E2 exposure and binding of E2 to SCARB1 and the tetraspanin CD81 (By similarity). E1/E2 heterodimer binding on CD81 activates the epithelial growth factor receptor (EGFR) signaling pathway (By similarity). Diffusion of the complex E1-E2-EGFR-SCARB1-CD81 to the cell lateral membrane allows further interaction with Claudin 1 (CLDN1) and occludin (OCLN) to finally trigger HCV entry (By similarity). Inhibits host EIF2AK2/PKR activation, preventing the establishment of an antiviral state (By similarity). Viral ligand for CD209/DC-SIGN and CLEC4M/DC-SIGNR, which are respectively found on dendritic cells (DCs), and on liver sinusoidal endothelial cells and macrophage-like cells of lymph node sinuses (By similarity). These interactions allow the capture of circulating HCV particles by these cells and subsequent facilitated transmission to permissive cells such as hepatocytes and lymphocyte subpopulations (By similarity). The interaction between E2 and host amino acid transporter complex formed by SLC3A2 and SLC7A5/LAT1 may facilitate viral entry into host cell (By similarity).</text>
</comment>
<comment type="function">
    <molecule>Viroporin p7</molecule>
    <text evidence="5 11 36">Ion channel protein that acts as a viroporin and plays an essential role in the assembly, envelopment and secretion of viral particles (By similarity). Regulates the host cell secretory pathway, which induces the intracellular retention of viral glycoproteins and favors assembly of viral particles (By similarity). Creates a pore in acidic organelles and releases Ca(2+) and H(+) in the cytoplasm of infected cells, leading to a productive viral infection (By similarity). High levels of cytoplasmic Ca(2+) may trigger membrane trafficking and transport of viral ER-associated proteins to viroplasms, sites of viral genome replication (Probable). This ionic imbalance induces the assembly of the inflammasome complex, which triggers the maturation of pro-IL-1beta into IL-1beta through the action of caspase-1 (By similarity). Targets also host mitochondria and induces mitochondrial depolarization (By similarity). In addition of its role as a viroporin, acts as a lipid raft adhesion factor (By similarity).</text>
</comment>
<comment type="function">
    <molecule>Protease NS2</molecule>
    <text evidence="12 22 41">Cysteine protease required for the proteolytic auto-cleavage between the non-structural proteins NS2 and NS3 (Probable) (PubMed:11591719). The N-terminus of NS3 is required for the function of NS2 protease (active region NS2-3) (PubMed:11591719). Promotes the initiation of viral particle assembly by mediating the interaction between structural and non-structural proteins (By similarity).</text>
</comment>
<comment type="function">
    <molecule>Serine protease/helicase NS3</molecule>
    <text evidence="5 12 34">Displays three enzymatic activities: serine protease with a chymotrypsin-like fold, NTPase and RNA helicase (PubMed:9614113). NS3 serine protease, in association with NS4A, is responsible for the cleavages of NS3-NS4A, NS4A-NS4B, NS4B-NS5A and NS5A-NS5B (By similarity). The NS3/NS4A complex prevents phosphorylation of host IRF3, thus preventing the establishment of dsRNA induced antiviral state (By similarity). The NS3/NS4A complex induces host amino acid transporter component SLC3A2, thus contributing to HCV propagation (By similarity). NS3 RNA helicase binds to RNA and unwinds both dsDNA and dsRNA in the 3' to 5' direction, and likely resolves RNA complicated stable secondary structures in the template strand (By similarity). Binds a single ATP and catalyzes the unzipping of a single base pair of dsRNA (By similarity). Inhibits host antiviral proteins TBK1 and IRF3 thereby preventing the establishment of an antiviral state (By similarity). Cleaves host MAVS/CARDIF thereby preventing the establishment of an antiviral state (By similarity). Cleaves host TICAM1/TRIF, thereby disrupting TLR3 signaling and preventing the establishment of an antiviral state (By similarity).</text>
</comment>
<comment type="function">
    <molecule>Non-structural protein 4A</molecule>
    <text evidence="5 12">Peptide cofactor which forms a non-covalent complex with the N-terminal of NS3 serine protease (By similarity). The NS3/NS4A complex prevents phosphorylation of host IRF3, thus preventing the establishment of dsRNA induced antiviral state (By similarity). The NS3/NS4A complex induces host amino acid transporter component SLC3A2, thus contributing to HCV propagation (By similarity).</text>
</comment>
<comment type="function">
    <molecule>Non-structural protein 4B</molecule>
    <text evidence="5">Induces a specific membrane alteration that serves as a scaffold for the virus replication complex (By similarity). This membrane alteration gives rise to the so-called ER-derived membranous web that contains the replication complex (By similarity). NS4B self-interaction contributes to its function in membranous web formation (By similarity). Promotes host TRIF protein degradation in a CASP8-dependent manner thereby inhibiting host TLR3-mediated interferon signaling (By similarity). Disrupts the interaction between STING and TBK1 contributing to the inhibition of interferon signaling (By similarity).</text>
</comment>
<comment type="function">
    <molecule>Non-structural protein 5A</molecule>
    <text evidence="3 4 5 11 12">Phosphorylated protein that is indispensable for viral replication and assembly (By similarity). Both hypo- and hyperphosphorylated states are required for the viral life cycle (By similarity). The hyperphosphorylated form of NS5A is an inhibitor of viral replication (By similarity). Involved in RNA-binding and especially in binding to the viral genome (By similarity). Zinc is essential for RNA-binding (By similarity). Participates in the viral particle production as a result of its interaction with the viral mature core protein (By similarity). Its interaction with host VAPB may target the viral replication complex to vesicles. Down-regulates viral IRES translation initiation (By similarity). Mediates interferon resistance, presumably by interacting with and inhibiting host EIF2AK2/PKR (By similarity). Prevents BIN1-induced apoptosis (By similarity). Acts as a transcriptional activator of some host genes important for viral replication when localized in the nucleus (By similarity). Via the interaction with host PACSIN2, modulates lipid droplet formation in order to promote virion assembly (By similarity). Modulates TNFRSF21/DR6 signaling pathway for viral propagation (By similarity).</text>
</comment>
<comment type="function">
    <molecule>RNA-directed RNA polymerase</molecule>
    <text evidence="5">RNA-dependent RNA polymerase that performs primer-template recognition and RNA synthesis during viral replication. Initiates RNA transcription/replication at a flavin adenine dinucleotide (FAD), resulting in a 5'- FAD cap on viral RNAs. In this way, recognition of viral 5' RNA by host pattern recognition receptors can be bypassed, thereby evading activation of antiviral pathways.</text>
</comment>
<comment type="catalytic activity">
    <molecule>Serine protease/helicase NS3</molecule>
    <reaction evidence="5">
        <text>Hydrolysis of four peptide bonds in the viral precursor polyprotein, commonly with Asp or Glu in the P6 position, Cys or Thr in P1 and Ser or Ala in P1'.</text>
        <dbReference type="EC" id="3.4.21.98"/>
    </reaction>
</comment>
<comment type="catalytic activity">
    <molecule>Serine protease/helicase NS3</molecule>
    <reaction evidence="5">
        <text>a ribonucleoside 5'-triphosphate + H2O = a ribonucleoside 5'-diphosphate + phosphate + H(+)</text>
        <dbReference type="Rhea" id="RHEA:23680"/>
        <dbReference type="ChEBI" id="CHEBI:15377"/>
        <dbReference type="ChEBI" id="CHEBI:15378"/>
        <dbReference type="ChEBI" id="CHEBI:43474"/>
        <dbReference type="ChEBI" id="CHEBI:57930"/>
        <dbReference type="ChEBI" id="CHEBI:61557"/>
        <dbReference type="EC" id="3.6.1.15"/>
    </reaction>
</comment>
<comment type="catalytic activity">
    <molecule>Serine protease/helicase NS3</molecule>
    <reaction evidence="5">
        <text>ATP + H2O = ADP + phosphate + H(+)</text>
        <dbReference type="Rhea" id="RHEA:13065"/>
        <dbReference type="ChEBI" id="CHEBI:15377"/>
        <dbReference type="ChEBI" id="CHEBI:15378"/>
        <dbReference type="ChEBI" id="CHEBI:30616"/>
        <dbReference type="ChEBI" id="CHEBI:43474"/>
        <dbReference type="ChEBI" id="CHEBI:456216"/>
        <dbReference type="EC" id="3.6.4.13"/>
    </reaction>
</comment>
<comment type="catalytic activity">
    <molecule>RNA-directed RNA polymerase</molecule>
    <reaction evidence="14 28 32">
        <text>RNA(n) + a ribonucleoside 5'-triphosphate = RNA(n+1) + diphosphate</text>
        <dbReference type="Rhea" id="RHEA:21248"/>
        <dbReference type="Rhea" id="RHEA-COMP:14527"/>
        <dbReference type="Rhea" id="RHEA-COMP:17342"/>
        <dbReference type="ChEBI" id="CHEBI:33019"/>
        <dbReference type="ChEBI" id="CHEBI:61557"/>
        <dbReference type="ChEBI" id="CHEBI:140395"/>
        <dbReference type="EC" id="2.7.7.48"/>
    </reaction>
</comment>
<comment type="cofactor">
    <molecule>Protease NS2</molecule>
    <cofactor evidence="22">
        <name>Zn(2+)</name>
        <dbReference type="ChEBI" id="CHEBI:29105"/>
    </cofactor>
    <text evidence="38">Activity of protease NS2 is dependent on zinc ions and completely inhibited by EDTA. This is probably due to the fact that NS2 protease activity needs NS3 N-terminus that binds a zinc atom (active region NS2-3).</text>
</comment>
<comment type="cofactor">
    <molecule>Serine protease/helicase NS3</molecule>
    <cofactor evidence="29">
        <name>Zn(2+)</name>
        <dbReference type="ChEBI" id="CHEBI:29105"/>
    </cofactor>
    <cofactor evidence="12">
        <name>Mg(2+)</name>
        <dbReference type="ChEBI" id="CHEBI:18420"/>
    </cofactor>
    <text evidence="12 29">Binds 1 zinc ion which has a structural role (PubMed:8861916). The magnesium ion is essential for the helicase activity (By similarity).</text>
</comment>
<comment type="cofactor">
    <molecule>RNA-directed RNA polymerase</molecule>
    <cofactor evidence="39">
        <name>Mg(2+)</name>
        <dbReference type="ChEBI" id="CHEBI:18420"/>
    </cofactor>
    <text evidence="39">Binds 2 magnesium ion that constitute a dinuclear catalytic metal center.</text>
</comment>
<comment type="activity regulation">
    <text evidence="3 5">Inhibited by the antiviral drug hexamethylene amiloride (By similarity). Inhibition by amantadine appears to be genotype-dependent (By similarity). Also inhibited by long-alkyl-chain iminosugar derivatives (By similarity).</text>
</comment>
<comment type="activity regulation">
    <molecule>RNA-directed RNA polymerase</molecule>
    <text evidence="5">Activity is up-regulated by PRK2/PKN2-mediated phosphorylation.</text>
</comment>
<comment type="activity regulation">
    <molecule>Protease NS2</molecule>
    <text evidence="31">Activity of auto-protease NS2 is dependent on zinc ions and completely inhibited by EDTA, 1,10-phenanthroline, iodocetamide and N-ethylmaleimide. According to PubMed:9261354, completely inhibited by the serine protease inhibitors TLCK and TPCK (PubMed:9261354). According to PubMed:8189501, almost completely inhibited by TPCK and slightly inhibited by TLCK. Not inhibited by antipain, aprotinin, E64, PMSF and pepstatin. Also inhibited by NS2 and NS4A derived peptides. Serine protease/helicase NS3 is also activated by zinc ions.</text>
</comment>
<comment type="biophysicochemical properties">
    <molecule>Protease NS2</molecule>
    <temperatureDependence>
        <text evidence="31">Optimum temperature is 20 degrees Celsius.</text>
    </temperatureDependence>
</comment>
<comment type="subunit">
    <molecule>Mature core protein</molecule>
    <text evidence="3 5 6 8 9 11">Homooligomer (By similarity). Interacts with E1 (via C-terminus) (By similarity). Interacts with the non-structural protein 5A (By similarity). Interacts (via N-terminus) with host STAT1 (via SH2 domain); this interaction results in decreased STAT1 phosphorylation and ubiquitin-mediated proteasome-dependent STAT1 degradation, leading to decreased IFN-stimulated gene transcription (By similarity). Interacts with host STAT3; this interaction constitutively activates STAT3 (By similarity). Associates with host LTBR receptor (By similarity). Interacts with host TNFRSF1A receptor and possibly induces apoptosis (By similarity). Interacts with host HNRPK (By similarity). Interacts with host YWHAE (By similarity). Interacts with host UBE3A/E6AP (By similarity). Interacts with host DDX3X (By similarity). Interacts with host APOA2 (By similarity). Interacts with host RXRA protein (By similarity). Interacts with host SP110 isoform 3/Sp110b; this interaction sequesters the transcriptional corepressor SP110 away from the nucleus (By similarity). Interacts with host CREB3 nuclear transcription protein; this interaction triggers cell transformation (By similarity). Interacts with host ACY3 (By similarity). Interacts with host C1QR1 (By similarity). Interacts with host RBM24; this interaction, which enhances the interaction of the mature core protein with 5'-UTR, may inhibit viral translation and favor replication (By similarity). Interacts (via N-terminus) with host EIF2AK2/PKR (via N-terminus); this interaction induces the autophosphorylation of EIF2AK2 (By similarity). Part of the viral assembly initiation complex composed of NS2, E1, E2, NS3, NS4A, NS5A and the mature core protein (By similarity).</text>
</comment>
<comment type="subunit">
    <molecule>Envelope glycoprotein E1</molecule>
    <text evidence="5 11">Forms a heterodimer with envelope glycoprotein E2 (By similarity). Interacts with mature core protein (By similarity). Interacts with protease NS2 (By similarity). The heterodimer E1/E2 interacts with host CLDN1; this interaction plays a role in viral entry into host cell (By similarity). Interacts with host SPSB2 (via C-terminus) (By similarity). Part of the viral assembly initiation complex composed of NS2, E1, E2, NS3, NS4A, NS5A and the mature core protein (By similarity). Interacts with host NEURL3; this interaction prevents E1 binding to glycoprotein E2 (By similarity).</text>
</comment>
<comment type="subunit">
    <molecule>Envelope glycoprotein E2</molecule>
    <text evidence="5 11 12">Forms a heterodimer with envelope glycoprotein E1 (By similarity). Interacts with host CD81 and SCARB1 receptors; these interactions play a role in viral entry into host cell (By similarity). Interacts with host EIF2AK2/PKR; this interaction inhibits EIF2AK2 and probably allows the virus to evade the innate immune response (By similarity). Interacts with host CD209/DC-SIGN and CLEC4M/DC-SIGNR (By similarity). Interact with host SPCS1; this interaction is essential for viral particle assembly (By similarity). Interacts with protease NS2 (By similarity). The heterodimer E1/E2 interacts with host CLDN1; this interaction plays a role in viral entry into host cell (By similarity). Part of the viral assembly initiation complex composed of NS2, E1, E2, NS3, NS4A, NS5A and the mature core protein (By similarity). Interacts with host SLC3A2/4F2hc; the interaction may facilitate viral entry into host cell (By similarity). Interacts with human PLSCR1 (By similarity).</text>
</comment>
<comment type="subunit">
    <molecule>Viroporin p7</molecule>
    <text evidence="2 5 11">Homohexamer (By similarity). Homoheptamer (By similarity). Interacts with protease NS2 (By similarity).</text>
</comment>
<comment type="subunit">
    <molecule>Protease NS2</molecule>
    <text evidence="5 11">Homodimer (By similarity). Interacts with host SPCS1; this interaction is essential for viral particle assembly (By similarity). Interacts with envelope glycoprotein E1 (By similarity). Interacts with envelope glycoprotein E2 (By similarity). Interacts with viroporin p7 (By similarity). Interacts with serine protease/helicase NS3 (By similarity). Part of the replication complex composed of NS2, NS3, NS4A, NS4B, NS5A and the RNA-directed RNA polymerase embedded in an ER-derived membranous web (By similarity). Part of the viral assembly initiation complex composed of NS2, E1, E2, NS3, NS4A, NS5A and the mature core protein (By similarity).</text>
</comment>
<comment type="subunit">
    <molecule>Serine protease/helicase NS3</molecule>
    <text evidence="5 11 12 20 33">Interacts with protease NS2 (By similarity). Interacts with non-structural protein 4A; this interaction stabilizes the folding of NS3 serine protease (PubMed:10366511, PubMed:9568891). NS3-NS4A interaction is essential for NS3 activation and allows membrane anchorage of the latter (PubMed:9568891). NS3/NS4A complex also prevents phosphorylation of host IRF3, thus preventing the establishment of dsRNA induced antiviral state (By similarity). Interacts with host MAVS; this interaction leads to the cleavage and inhibition of host MAVS (By similarity). Interacts with host TICAM1; this interaction leads to the cleavage and inhibition of host TICAM1 (By similarity). Interacts with host TANK-binding kinase/TBK1; this interaction results in the inhibition of the association between TBK1 and IRF3, which leads to the inhibition of IRF3 activation (By similarity). Interacts with host RBM24 (By similarity). Part of the replication complex composed of NS2, NS3, NS4A, NS4B, NS5A and the RNA-directed RNA polymerase embedded in an ER-derived membranous web (By similarity). Part of the viral assembly initiation complex composed of NS2, E1, E2, NS3, NS4A, NS5A and the mature core protein (By similarity).</text>
</comment>
<comment type="subunit">
    <molecule>Non-structural protein 4A</molecule>
    <text evidence="3 5 11 20 33">Interacts with NS3 serine protease; this interaction stabilizes the folding of NS3 serine protease (PubMed:10366511, PubMed:9568891). NS3-NS4A interaction is essential for NS3 activation and allows membrane anchorage of the latter (PubMed:9568891). Interacts with non-structural protein 5A (via N-terminus) (By similarity). Part of the replication complex composed of NS2, NS3, NS4A, NS4B, NS5A and the RNA-directed RNA polymerase embedded in an ER-derived membranous web (By similarity). Part of the viral assembly initiation complex composed of NS2, E1, E2, NS3, NS4A, NS5A and the mature core protein (By similarity).</text>
</comment>
<comment type="subunit">
    <molecule>Non-structural protein 5A</molecule>
    <text evidence="3 4 5 11 19 23 35">Monomer (By similarity). Homodimer; dimerization is required for RNA-binding (By similarity). Interacts with the mature core protein (By similarity). Interacts (via N-terminus) with non-structural protein 4A (By similarity). Interacts with non-structural protein 4B (By similarity). Interacts with RNA-directed RNA polymerase (By similarity). Part of the viral assembly initiation complex composed of NS2, E1, E2, NS3, NS4A, NS5A and the mature core protein (By similarity). Part of the replication complex composed of NS2, NS3, NS4A, NS4B, NS5A and the RNA-directed RNA polymerase embedded in an ER-derived membranous web (By similarity). Interacts with host GRB2 (PubMed:10318918). Interacts with host BIN1 (By similarity). Interacts with host PIK3R1 (PubMed:12186904). Interacts with host SRCAP (By similarity). Interacts with host FKBP8 (By similarity). Interacts with host VAPB (By similarity). Interacts with host EIF2AK2/PKR; this interaction leads to disruption of EIF2AK2 dimerization by NS5A and probably allows the virus to evade the innate immune response (PubMed:9710605). Interacts (via N-terminus) with host PACSIN2 (via N-terminus); this interaction attenuates protein kinase C alpha-mediated phosphorylation of PACSIN2 by disrupting the interaction between PACSIN2 and PRKCA (By similarity). Interacts (via N-terminus) with host SRC kinase (via SH2 domain) (By similarity). Interacts with most Src-family kinases (By similarity). Interacts with host IFI27 and SKP2; promotes the ubiquitin-mediated proteasomal degradation of NS5A (By similarity). Interacts with host GPS2 (By similarity). Interacts with host TNFRSF21; this interaction allows the modulation by the virus of JNK, p38 MAPK, STAT3, and Akt signaling pathways in a DR6-dependent manner (By similarity). Interacts (via N-terminus) with host CIDEB (via N-terminus); this interaction seems to regulate the association of HCV particles with APOE (By similarity). Interacts with host CHKA/Choline Kinase-alpha; CHKA bridges host PI4KA and NS5A and potentiates NS5A-stimulated PI4KA activity, which then facilitates the targeting of the ternary complex to the ER for viral replication (By similarity). Interacts with host SPSB2 (via C-terminus); this interaction targets NS5A for ubiquitination and degradation (By similarity). Interacts with host RAB18; this interaction may promote the association of NS5A and other replicase components with lipid droplets (By similarity). Interacts (via region D2) with host PPIA/CYPA; the interaction stimulates RNA-binding ability of NS5A and is dependent on the peptidyl-prolyl cis-trans isomerase activity of PPIA/CYPA. Interacts with host TRIM14; this interaction induces the degradation of NS5A (By similarity).</text>
</comment>
<comment type="subunit">
    <molecule>RNA-directed RNA polymerase</molecule>
    <text evidence="3 5">Homooligomer. Interacts with non-structural protein 5A (By similarity). Interacts with host VAPB (By similarity). Interacts with host PRK2/PKN2 (By similarity). Interacts with host HNRNPA1 and SEPT6; these interactions facilitate the viral replication (By similarity). Part of the replication complex composed of NS2, NS3, NS4A, NS4B, NS5A and the RNA-directed RNA polymerase embedded in an ER-derived membranous web (By similarity).</text>
</comment>
<comment type="interaction">
    <interactant intactId="EBI-6857429">
        <id>P26663</id>
    </interactant>
    <interactant intactId="EBI-647785">
        <id>P52480</id>
        <label>Pkm</label>
    </interactant>
    <organismsDiffer>true</organismsDiffer>
    <experiments>3</experiments>
</comment>
<comment type="interaction">
    <interactant intactId="EBI-6857429">
        <id>P26663</id>
    </interactant>
    <interactant intactId="EBI-1693">
        <id>Q62245</id>
        <label>Sos1</label>
    </interactant>
    <organismsDiffer>true</organismsDiffer>
    <experiments>2</experiments>
</comment>
<comment type="interaction">
    <interactant intactId="EBI-6838571">
        <id>PRO_0000037536</id>
    </interactant>
    <interactant intactId="EBI-6838576">
        <id>PRO_0000037537</id>
        <label>-</label>
        <dbReference type="UniProtKB" id="P26663"/>
    </interactant>
    <organismsDiffer>false</organismsDiffer>
    <experiments>6</experiments>
</comment>
<comment type="interaction">
    <interactant intactId="EBI-6838571">
        <id>PRO_0000037536</id>
    </interactant>
    <interactant intactId="EBI-366083">
        <id>P04637</id>
        <label>TP53</label>
    </interactant>
    <organismsDiffer>true</organismsDiffer>
    <experiments>9</experiments>
</comment>
<comment type="interaction">
    <interactant intactId="EBI-6874437">
        <id>PRO_0000037540</id>
    </interactant>
    <interactant intactId="EBI-6874437">
        <id>PRO_0000037540</id>
        <label>-</label>
        <dbReference type="UniProtKB" id="P26663"/>
    </interactant>
    <organismsDiffer>false</organismsDiffer>
    <experiments>2</experiments>
</comment>
<comment type="interaction">
    <interactant intactId="EBI-6874437">
        <id>PRO_0000037540</id>
    </interactant>
    <interactant intactId="EBI-6863741">
        <id>PRO_0000037548</id>
        <dbReference type="UniProtKB" id="Q9WMX2"/>
    </interactant>
    <organismsDiffer>true</organismsDiffer>
    <experiments>5</experiments>
</comment>
<comment type="subcellular location">
    <molecule>Core protein precursor</molecule>
    <subcellularLocation>
        <location evidence="4">Host endoplasmic reticulum membrane</location>
        <topology evidence="13">Single-pass membrane protein</topology>
    </subcellularLocation>
    <subcellularLocation>
        <location evidence="4">Host mitochondrion membrane</location>
        <topology evidence="13">Single-pass type I membrane protein</topology>
    </subcellularLocation>
    <text>The C-terminal transmembrane domain of the core protein precursor contains an ER signal leading the nascent polyprotein to the ER membrane.</text>
</comment>
<comment type="subcellular location">
    <molecule>Mature core protein</molecule>
    <subcellularLocation>
        <location evidence="11">Virion</location>
    </subcellularLocation>
    <subcellularLocation>
        <location evidence="5">Host cytoplasm</location>
    </subcellularLocation>
    <subcellularLocation>
        <location evidence="3">Host nucleus</location>
    </subcellularLocation>
    <subcellularLocation>
        <location evidence="27">Host lipid droplet</location>
    </subcellularLocation>
    <text evidence="5 27">Only a minor proportion of core protein is present in the nucleus (By similarity). Probably present on the surface of lipid droplets (PubMed:17188392).</text>
</comment>
<comment type="subcellular location">
    <molecule>Envelope glycoprotein E1</molecule>
    <subcellularLocation>
        <location evidence="36">Virion membrane</location>
        <topology evidence="36">Single-pass type I membrane protein</topology>
    </subcellularLocation>
    <subcellularLocation>
        <location>Host endoplasmic reticulum membrane</location>
        <topology evidence="5">Single-pass type I membrane protein</topology>
    </subcellularLocation>
    <text evidence="5">The C-terminal transmembrane domain acts as a signal sequence and forms a hairpin structure before cleavage by host signal peptidase (By similarity). After cleavage, the membrane sequence is retained at the C-terminus of the protein, serving as ER membrane anchor (By similarity). A reorientation of the second hydrophobic stretch occurs after cleavage producing a single reoriented transmembrane domain (By similarity). These events explain the final topology of the protein (By similarity).</text>
</comment>
<comment type="subcellular location">
    <molecule>Envelope glycoprotein E2</molecule>
    <subcellularLocation>
        <location evidence="36">Virion membrane</location>
        <topology evidence="36">Single-pass type I membrane protein</topology>
    </subcellularLocation>
    <subcellularLocation>
        <location>Host endoplasmic reticulum membrane</location>
        <topology evidence="5">Single-pass type I membrane protein</topology>
    </subcellularLocation>
    <subcellularLocation>
        <location evidence="12">Host lipid droplet</location>
    </subcellularLocation>
    <text evidence="5">The C-terminal transmembrane domain acts as a signal sequence and forms a hairpin structure before cleavage by host signal peptidase (By similarity). After cleavage, the membrane sequence is retained at the C-terminus of the protein, serving as ER membrane anchor (By similarity). A reorientation of the second hydrophobic stretch occurs after cleavage producing a single reoriented transmembrane domain (By similarity). These events explain the final topology of the protein (By similarity).</text>
</comment>
<comment type="subcellular location">
    <molecule>Viroporin p7</molecule>
    <subcellularLocation>
        <location evidence="5">Host endoplasmic reticulum membrane</location>
        <topology evidence="5">Multi-pass membrane protein</topology>
    </subcellularLocation>
    <subcellularLocation>
        <location evidence="5">Host mitochondrion</location>
    </subcellularLocation>
    <subcellularLocation>
        <location evidence="5">Host cell membrane</location>
    </subcellularLocation>
    <text evidence="5">The C-terminus of p7 membrane domain acts as a signal sequence (By similarity). After cleavage by host signal peptidase, the membrane sequence is retained at the C-terminus of the protein, serving as ER membrane anchor (By similarity). ER retention of p7 is leaky and a small fraction reaches the plasma membrane (By similarity).</text>
</comment>
<comment type="subcellular location">
    <molecule>Protease NS2</molecule>
    <subcellularLocation>
        <location evidence="5">Host endoplasmic reticulum membrane</location>
        <topology evidence="5">Multi-pass membrane protein</topology>
    </subcellularLocation>
    <subcellularLocation>
        <location evidence="12">Host lipid droplet</location>
    </subcellularLocation>
    <text evidence="11">Probably present on the surface of lipid droplets.</text>
</comment>
<comment type="subcellular location">
    <molecule>Serine protease/helicase NS3</molecule>
    <subcellularLocation>
        <location evidence="36">Host endoplasmic reticulum membrane</location>
        <topology evidence="36">Peripheral membrane protein</topology>
    </subcellularLocation>
    <text evidence="36">NS3 is associated to the ER membrane through its binding to NS4A.</text>
</comment>
<comment type="subcellular location">
    <molecule>Non-structural protein 4A</molecule>
    <subcellularLocation>
        <location evidence="36">Host endoplasmic reticulum membrane</location>
        <topology evidence="36">Single-pass type I membrane protein</topology>
    </subcellularLocation>
    <text>Host membrane insertion occurs after processing by the NS3 protease.</text>
</comment>
<comment type="subcellular location">
    <molecule>Non-structural protein 4B</molecule>
    <subcellularLocation>
        <location evidence="5">Host endoplasmic reticulum membrane</location>
        <topology evidence="5">Multi-pass membrane protein</topology>
    </subcellularLocation>
    <text evidence="5">A reorientation of the N-terminus into the ER lumen occurs post-translationally.</text>
</comment>
<comment type="subcellular location">
    <molecule>Non-structural protein 5A</molecule>
    <subcellularLocation>
        <location evidence="5">Host endoplasmic reticulum membrane</location>
        <topology evidence="5">Peripheral membrane protein</topology>
    </subcellularLocation>
    <subcellularLocation>
        <location evidence="5">Host cytoplasm</location>
        <location evidence="5">Host perinuclear region</location>
    </subcellularLocation>
    <subcellularLocation>
        <location evidence="3">Host mitochondrion</location>
    </subcellularLocation>
    <subcellularLocation>
        <location evidence="5">Host cytoplasm</location>
    </subcellularLocation>
    <subcellularLocation>
        <location evidence="3">Host nucleus</location>
    </subcellularLocation>
    <subcellularLocation>
        <location evidence="12">Host lipid droplet</location>
    </subcellularLocation>
    <text evidence="3 5">Host membrane insertion occurs after processing by the NS3 protease (By similarity). Localizes at the surface of lipid droplets (By similarity).</text>
</comment>
<comment type="subcellular location">
    <molecule>RNA-directed RNA polymerase</molecule>
    <subcellularLocation>
        <location evidence="5">Host cytoplasm</location>
    </subcellularLocation>
    <subcellularLocation>
        <location>Host endoplasmic reticulum membrane</location>
        <topology evidence="5">Single-pass type IV membrane protein</topology>
    </subcellularLocation>
    <text evidence="5">Host membrane insertion occurs after processing by the NS3 protease.</text>
</comment>
<comment type="domain">
    <molecule>Envelope glycoprotein E1</molecule>
    <text evidence="5">The transmembrane regions of envelope E1 and E2 glycoproteins are involved in heterodimer formation, ER localization, and assembly of these proteins.</text>
</comment>
<comment type="domain">
    <molecule>Envelope glycoprotein E2</molecule>
    <text evidence="5 24">The transmembrane regions of envelope E1 and E2 glycoproteins are involved in heterodimer formation, ER localization, and assembly of these proteins (By similarity). Envelope E2 glycoprotein contain two highly variable regions called hypervariable region 1 and 2 (HVR1 and HVR2) (By similarity). E2 also contain two segments involved in CD81-binding (PubMed:12660945). HVR1 is implicated in the SCARB1-mediated cell entry and probably acts as a regulator of the association of particles with lipids (By similarity).</text>
</comment>
<comment type="domain">
    <molecule>Protease NS2</molecule>
    <text evidence="22 31">The N-terminus of NS3 is required for the catalytic activity of protease NS2 (PubMed:11591719, PubMed:9261354). The minimal catalytic region includes the C-terminus of NS2 and the N-terminus NS3 protease domain (active region NS2-3) (PubMed:11591719).</text>
</comment>
<comment type="domain">
    <molecule>Serine protease/helicase NS3</molecule>
    <text evidence="3 22 31 34">The N-terminal one-third of serine protease/helicase NS3 contains the protease activity (PubMed:11591719, PubMed:9261354). This region contains a zinc atom that does not belong to the active site, but may play a structural rather than a catalytic role (By similarity). This region is essential for the activity of protease NS2, maybe by contributing to the folding of the latter (By similarity). The NTPase/helicase activity is located in the twothirds C-terminus of NS3, this domain contains the NTPase and RNA-binding regions (PubMed:9614113).</text>
</comment>
<comment type="domain">
    <molecule>Non-structural protein 4B</molecule>
    <text evidence="11">Contains a glycine zipper region that critically contributes to the biogenesis of functional ER-derived replication organelles.</text>
</comment>
<comment type="domain">
    <molecule>Non-structural protein 5A</molecule>
    <text evidence="3 5 42">The N-terminus of NS5A acts as membrane anchor (By similarity). The central part of NS5A contains a variable region called interferon sensitivity determining region (ISDR) and seems to be intrinsically disordered and interacts with NS5B and host EIF2AK2 (Probable). The C-terminus of NS5A contains a variable region called variable region 3 (V3) (By similarity). ISDR and V3 may be involved in sensitivity and/or resistance to IFN-alpha therapy (By similarity). The C-terminus contains a nuclear localization signal (By similarity). The SH3-binding domain is involved in the interaction with host BIN1, GRB2 and Src-family kinases (By similarity).</text>
</comment>
<comment type="PTM">
    <molecule>Genome polyprotein</molecule>
    <text evidence="5 22 30">Specific enzymatic cleavages in vivo yield mature proteins (By similarity). The structural proteins, core, E1, E2 and p7 are produced by proteolytic processing by host signal peptidases (By similarity). The core protein precursor is synthesized as a 23 kDa, which is retained in the ER membrane through the hydrophobic signal peptide (PubMed:8862403). Cleavage by the signal peptidase releases the 21 kDa mature core protein (PubMed:8862403). The cleavage of the core protein precursor occurs between aminoacids 176 and 188 but the exact cleavage site is not known (PubMed:8862403). Some degraded forms of the core protein appear as well during the course of infection (PubMed:8862403). The other proteins (p7, NS2, NS3, NS4A, NS4B, NS5A and NS5B) are cleaved by the viral proteases (By similarity). Autoprocessing between NS2 and NS3 is mediated by the NS2 cysteine protease catalytic domain and regulated by the NS3 N-terminal domain (PubMed:11591719).</text>
</comment>
<comment type="PTM">
    <molecule>Mature core protein</molecule>
    <text evidence="7">Phosphorylated by host PKC and PKA.</text>
</comment>
<comment type="PTM">
    <molecule>Mature core protein</molecule>
    <text evidence="8">Ubiquitinated; mediated by UBE3A and leading to core protein subsequent proteasomal degradation.</text>
</comment>
<comment type="PTM">
    <molecule>Envelope glycoprotein E1</molecule>
    <text evidence="5">Highly N-glycosylated.</text>
</comment>
<comment type="PTM">
    <molecule>Envelope glycoprotein E2</molecule>
    <text evidence="5">Highly N-glycosylated.</text>
</comment>
<comment type="PTM">
    <molecule>Protease NS2</molecule>
    <text evidence="5">Palmitoylation is required for NS2/3 autoprocessing and E2 recruitment to membranes.</text>
</comment>
<comment type="PTM">
    <molecule>Non-structural protein 4B</molecule>
    <text evidence="5">Palmitoylated. This modification may play a role in its polymerization or in protein-protein interactions.</text>
</comment>
<comment type="PTM">
    <molecule>Non-structural protein 5A</molecule>
    <text evidence="3 21 25 26">Phosphorylated on serines in a basal form termed p56 (PubMed:11118372). p58 is a hyperphosphorylated form of p56 (By similarity). p56 and p58 coexist in the cell in roughly equivalent amounts (By similarity). Hyperphosphorylation is dependent on the presence of NS4A (By similarity). Host CSNK1A1/CKI-alpha or RPS6KB1 kinases may be responsible for NS5A phosphorylation (PubMed:15016873, PubMed:16943283).</text>
</comment>
<comment type="PTM">
    <molecule>Non-structural protein 5A</molecule>
    <text evidence="11">Tyrosine phosphorylation is essential for the interaction with host SRC.</text>
</comment>
<comment type="PTM">
    <molecule>RNA-directed RNA polymerase</molecule>
    <text evidence="3">The N-terminus is phosphorylated by host PRK2/PKN2.</text>
</comment>
<comment type="miscellaneous">
    <text evidence="36">Viral particle assembly takes place at the surface of ER-derived membranes in close proximity to lipid droplets. NS2 associates with E1/E2 glycoproteins, NS3 and NS5A, which interacts with the viral RNA and core protein to promote genome encapsidation. The nucleocapsid buds at the ER membrane where E1/E2 glycoproteins are anchored and afterward associate with nascent lipid droplet to acquire APOE and APOC. Secretion of viral particles is probably regulated by viroporin p7.</text>
</comment>
<comment type="miscellaneous">
    <molecule>Non-structural protein 5A</molecule>
    <text evidence="36">Cell culture adaptation of the virus leads to mutations in NS5A, reducing its inhibitory effect on replication.</text>
</comment>
<comment type="miscellaneous">
    <molecule>Mature core protein</molecule>
    <text evidence="3">Exerts viral interference on hepatitis B virus when HCV and HBV coinfect the same cell, by suppressing HBV gene expression, RNA encapsidation and budding.</text>
</comment>
<comment type="similarity">
    <text evidence="36">Belongs to the hepacivirus polyprotein family.</text>
</comment>
<comment type="caution">
    <text evidence="36">The core gene probably also codes for alternative reading frame proteins (ARFPs). Many functions depicted for the core protein might belong to the ARFPs.</text>
</comment>
<protein>
    <recommendedName>
        <fullName>Genome polyprotein</fullName>
    </recommendedName>
    <component>
        <recommendedName>
            <fullName>Core protein precursor</fullName>
        </recommendedName>
        <alternativeName>
            <fullName>Capsid protein C</fullName>
        </alternativeName>
        <alternativeName>
            <fullName>p23</fullName>
        </alternativeName>
    </component>
    <component>
        <recommendedName>
            <fullName>Mature core protein</fullName>
        </recommendedName>
        <alternativeName>
            <fullName>p21</fullName>
        </alternativeName>
    </component>
    <component>
        <recommendedName>
            <fullName>Envelope glycoprotein E1</fullName>
        </recommendedName>
        <alternativeName>
            <fullName>gp32</fullName>
        </alternativeName>
        <alternativeName>
            <fullName>gp35</fullName>
        </alternativeName>
    </component>
    <component>
        <recommendedName>
            <fullName>Envelope glycoprotein E2</fullName>
        </recommendedName>
        <alternativeName>
            <fullName>NS1</fullName>
        </alternativeName>
        <alternativeName>
            <fullName>gp68</fullName>
        </alternativeName>
        <alternativeName>
            <fullName>gp70</fullName>
        </alternativeName>
    </component>
    <component>
        <recommendedName>
            <fullName>Viroporin p7</fullName>
        </recommendedName>
    </component>
    <component>
        <recommendedName>
            <fullName>Protease NS2</fullName>
            <shortName>p23</shortName>
            <ecNumber evidence="22 31">3.4.22.-</ecNumber>
        </recommendedName>
    </component>
    <component>
        <recommendedName>
            <fullName>Serine protease/helicase NS3</fullName>
            <ecNumber evidence="5">3.4.21.98</ecNumber>
            <ecNumber evidence="5">3.6.1.15</ecNumber>
            <ecNumber evidence="5">3.6.4.13</ecNumber>
        </recommendedName>
        <alternativeName>
            <fullName>Hepacivirin</fullName>
        </alternativeName>
        <alternativeName>
            <fullName evidence="5">NS3 helicase</fullName>
        </alternativeName>
        <alternativeName>
            <fullName evidence="5">NS3 protease</fullName>
        </alternativeName>
        <alternativeName>
            <fullName>NS3P</fullName>
        </alternativeName>
        <alternativeName>
            <fullName>Viroporin p70</fullName>
        </alternativeName>
    </component>
    <component>
        <recommendedName>
            <fullName>Non-structural protein 4A</fullName>
            <shortName>NS4A</shortName>
        </recommendedName>
        <alternativeName>
            <fullName>p8</fullName>
        </alternativeName>
    </component>
    <component>
        <recommendedName>
            <fullName>Non-structural protein 4B</fullName>
            <shortName>NS4B</shortName>
        </recommendedName>
        <alternativeName>
            <fullName>p27</fullName>
        </alternativeName>
    </component>
    <component>
        <recommendedName>
            <fullName>Non-structural protein 5A</fullName>
            <shortName>NS5A</shortName>
        </recommendedName>
        <alternativeName>
            <fullName>p56/58</fullName>
        </alternativeName>
    </component>
    <component>
        <recommendedName>
            <fullName>RNA-directed RNA polymerase</fullName>
            <ecNumber evidence="28 32">2.7.7.48</ecNumber>
        </recommendedName>
        <alternativeName>
            <fullName>NS5B</fullName>
        </alternativeName>
        <alternativeName>
            <fullName>p68</fullName>
        </alternativeName>
    </component>
</protein>
<reference key="1">
    <citation type="journal article" date="1991" name="J. Virol.">
        <title>Structure and organization of the hepatitis C virus genome isolated from human carriers.</title>
        <authorList>
            <person name="Takamizawa A."/>
            <person name="Mori C."/>
            <person name="Fuke I."/>
            <person name="Manabe S."/>
            <person name="Murakami S."/>
            <person name="Fujita J."/>
            <person name="Onishi E."/>
            <person name="Andoh T."/>
            <person name="Yoshida I."/>
            <person name="Okayama H."/>
        </authorList>
    </citation>
    <scope>NUCLEOTIDE SEQUENCE [GENOMIC RNA]</scope>
</reference>
<reference key="2">
    <citation type="journal article" date="1996" name="Eur. J. Biochem.">
        <title>Non-structural protein 3 of hepatitis C virus inhibits phosphorylation mediated by cAMP-dependent protein kinase.</title>
        <authorList>
            <person name="Borowski P."/>
            <person name="Heiland M."/>
            <person name="Oehlmann K."/>
            <person name="Becker B."/>
            <person name="Korneteky L."/>
        </authorList>
    </citation>
    <scope>PROTEIN SEQUENCE OF 1487-1500</scope>
</reference>
<reference key="3">
    <citation type="journal article" date="1994" name="J. Virol.">
        <title>Biosynthesis and biochemical properties of the hepatitis C virus core protein.</title>
        <authorList>
            <person name="Santolini E."/>
            <person name="Migliaccio G."/>
            <person name="La Monica N."/>
        </authorList>
    </citation>
    <scope>SUBCELLULAR LOCATION (MATURE CORE PROTEIN)</scope>
    <scope>RNA-BINDING ACTIVITY (MATURE CORE PROTEIN)</scope>
    <scope>FUNCTION (MATURE CORE PROTEIN)</scope>
</reference>
<reference key="4">
    <citation type="journal article" date="1996" name="Virology">
        <title>Hepatitis C virus core protein: carboxy-terminal boundaries of two processed species suggest cleavage by a signal peptide peptidase.</title>
        <authorList>
            <person name="Huessy P."/>
            <person name="Langen H."/>
            <person name="Mous J."/>
            <person name="Jacobsen H."/>
        </authorList>
    </citation>
    <scope>PROTEOLYTIC CLEAVAGE (GENOME POLYPROTEIN)</scope>
    <scope>GLYCOSYLATION AT ASN-196</scope>
</reference>
<reference key="5">
    <citation type="journal article" date="1997" name="J. Virol.">
        <title>In vitro study of the NS2-3 protease of hepatitis C virus.</title>
        <authorList>
            <person name="Pieroni L."/>
            <person name="Santolini E."/>
            <person name="Fipaldini C."/>
            <person name="Pacini L."/>
            <person name="Migliaccio G."/>
            <person name="La Monica N."/>
        </authorList>
    </citation>
    <scope>FUNCTION (PROTEASE NS2)</scope>
    <scope>PROTEOLYTIC CLEAVAGE (GENOME POLYPROTEIN)</scope>
    <scope>CATALYTIC ACTIVITY (PROTEASE NS2)</scope>
    <scope>BIOPHYSICOCHEMICAL PROPERTIES (PROTEASE NS2)</scope>
    <scope>DOMAIN (PROTEASE NS2)</scope>
    <scope>DOMAIN (SERINE PROTEASE/HELICASE NS3)</scope>
</reference>
<reference key="6">
    <citation type="journal article" date="1997" name="J. Virol.">
        <title>Biochemical properties of hepatitis C virus NS5B RNA-dependent RNA polymerase and identification of amino acid sequence motifs essential for enzymatic activity.</title>
        <authorList>
            <person name="Lohmann V."/>
            <person name="Koerner F."/>
            <person name="Herian U."/>
            <person name="Bartenschlager R."/>
        </authorList>
    </citation>
    <scope>FUNCTION (RNA-DIRECTED RNA POLYMERASE)</scope>
    <scope>CATALYTIC ACTIVITY (RNA-DIRECTED RNA POLYMERASE)</scope>
    <scope>MUTAGENESIS OF ASP-2639; ASP-2644; GLY-2702; THR-2705; THR-2706; ASN-2710; ASP-2737 AND ASP-2738</scope>
</reference>
<reference key="7">
    <citation type="journal article" date="1998" name="Mol. Cell. Biol.">
        <title>Control of PKR protein kinase by hepatitis C virus nonstructural 5A protein: molecular mechanisms of kinase regulation.</title>
        <authorList>
            <person name="Gale M.J. Jr."/>
            <person name="Blakely C.M."/>
            <person name="Kwieciszewski B."/>
            <person name="Tan S.-L."/>
            <person name="Dossett M."/>
            <person name="Tang N.M."/>
            <person name="Korth M.J."/>
            <person name="Polyak S.J."/>
            <person name="Gretch D.R."/>
            <person name="Katze M.G."/>
        </authorList>
    </citation>
    <scope>FUNCTION (NON-STRUCTURAL PROTEIN 5A)</scope>
    <scope>INTERACTION WITH HOST EIF2AK2/PKR (NON-STRUCTURAL PROTEIN 5A)</scope>
    <scope>DOMAIN (NON-STRUCTURAL PROTEIN 5A)</scope>
</reference>
<reference key="8">
    <citation type="journal article" date="1999" name="Proc. Natl. Acad. Sci. U.S.A.">
        <title>NS5A, a nonstructural protein of hepatitis C virus, binds growth factor receptor-bound protein 2 adaptor protein in a Src homology 3 domain/ligand-dependent manner and perturbs mitogenic signaling.</title>
        <authorList>
            <person name="Tan S.-L."/>
            <person name="Nakao H."/>
            <person name="He Y."/>
            <person name="Vijaysri S."/>
            <person name="Neddermann P."/>
            <person name="Jacobs B.L."/>
            <person name="Mayer B.J."/>
            <person name="Katze M.G."/>
        </authorList>
    </citation>
    <scope>INTERACTION WITH HOST GRB2 (NON-STRUCTURAL PROTEIN 5A)</scope>
    <scope>MUTAGENESIS OF PRO-2322; PRO-2323 AND PRO-2326</scope>
</reference>
<reference key="9">
    <citation type="journal article" date="2000" name="Virology">
        <title>Ser(2194) is a highly conserved major phosphorylation site of the hepatitis C virus nonstructural protein NS5A.</title>
        <authorList>
            <person name="Katze M.G."/>
            <person name="Kwieciszewski B."/>
            <person name="Goodlett D.R."/>
            <person name="Blakely C.M."/>
            <person name="Neddermann P."/>
            <person name="Tan S.-L."/>
            <person name="Aebersold R."/>
        </authorList>
    </citation>
    <scope>PHOSPHORYLATION AT SER-2194</scope>
    <scope>MUTAGENESIS OF SER-2194</scope>
</reference>
<reference key="10">
    <citation type="journal article" date="2001" name="J. Biol. Chem.">
        <title>In vitro characterization of a purified NS2/3 protease variant of hepatitis C virus.</title>
        <authorList>
            <person name="Thibeault D."/>
            <person name="Maurice R."/>
            <person name="Pilote L."/>
            <person name="Lamarre D."/>
            <person name="Pause A."/>
        </authorList>
    </citation>
    <scope>COFACTOR (PROTEASE NS2)</scope>
    <scope>CATALYTIC ACTIVITY (PROTEASE NS2)</scope>
    <scope>PROTEOLYTIC CLEAVAGE (GENOME POLYPROTEIN)</scope>
    <scope>DOMAIN (SERINE PROTEASE/HELICASE NS3)</scope>
    <scope>DOMAIN (PROTEASE NS2)</scope>
</reference>
<reference key="11">
    <citation type="journal article" date="2002" name="J. Virol.">
        <title>Subversion of cell signaling pathways by hepatitis C virus nonstructural 5A protein via interaction with Grb2 and P85 phosphatidylinositol 3-kinase.</title>
        <authorList>
            <person name="He Y."/>
            <person name="Nakao H."/>
            <person name="Tan S.-L."/>
            <person name="Polyak S.J."/>
            <person name="Neddermann P."/>
            <person name="Vijaysri S."/>
            <person name="Jacobs B.L."/>
            <person name="Katze M.G."/>
        </authorList>
    </citation>
    <scope>INTERACTION WITH HOST PIK3R1 (NON-STRUCTURAL PROTEIN 5A)</scope>
</reference>
<reference key="12">
    <citation type="journal article" date="2003" name="J. Infect. Dis.">
        <title>Mutations within the CD81-binding sites and hypervariable region 2 of the envelope 2 protein: correlation with treatment response in hepatitis C virus-infected patients.</title>
        <authorList>
            <person name="Hofmann W.P."/>
            <person name="Sarrazin C."/>
            <person name="Kronenberger B."/>
            <person name="Schonberger B."/>
            <person name="Bruch K."/>
            <person name="Zeuzem S."/>
        </authorList>
    </citation>
    <scope>DOMAIN (ENVELOPE GLYCOPROTEIN E2)</scope>
</reference>
<reference key="13">
    <citation type="journal article" date="2004" name="J. Virol.">
        <title>High-throughput screening of the yeast kinome: identification of human serine/threonine protein kinases that phosphorylate the hepatitis C virus NS5A protein.</title>
        <authorList>
            <person name="Coito C."/>
            <person name="Diamond D.L."/>
            <person name="Neddermann P."/>
            <person name="Korth M.J."/>
            <person name="Katze M.G."/>
        </authorList>
    </citation>
    <scope>PHOSPHORYLATION (NON-STRUCTURAL PROTEIN 5A)</scope>
</reference>
<reference key="14">
    <citation type="journal article" date="2006" name="J. Virol.">
        <title>The alpha isoform of protein kinase CKI is responsible for hepatitis C virus NS5A hyperphosphorylation.</title>
        <authorList>
            <person name="Quintavalle M."/>
            <person name="Sambucini S."/>
            <person name="Di Pietro C."/>
            <person name="De Francesco R."/>
            <person name="Neddermann P."/>
        </authorList>
    </citation>
    <scope>PHOSPHORYLATION BY HOST CSNK1A1 (NON-STRUCTURAL PROTEIN 5A)</scope>
    <source>
        <strain>Isolate HCV-AT</strain>
    </source>
</reference>
<reference key="15">
    <citation type="journal article" date="2007" name="J. Hepatol.">
        <title>Up-regulation of fatty acid synthase promoter by hepatitis C virus core protein: genotype-3a core has a stronger effect than genotype-1b core.</title>
        <authorList>
            <person name="Jackel-Cram C."/>
            <person name="Babiuk L.A."/>
            <person name="Liu Q."/>
        </authorList>
    </citation>
    <scope>SUBCELLULAR LOCATION (MATURE CORE PROTEIN)</scope>
</reference>
<reference key="16">
    <citation type="journal article" date="2000" name="J. Viral Hepat.">
        <title>Properties of the hepatitis C virus core protein: a structural protein that modulates cellular processes.</title>
        <authorList>
            <person name="McLauchlan J."/>
        </authorList>
    </citation>
    <scope>REVIEW</scope>
</reference>
<reference key="17">
    <citation type="journal article" date="2004" name="Hepatology">
        <title>Structural biology of hepatitis C virus.</title>
        <authorList>
            <person name="Penin F."/>
            <person name="Dubuisson J."/>
            <person name="Rey F.A."/>
            <person name="Moradpour D."/>
            <person name="Pawlotsky J.-M."/>
        </authorList>
    </citation>
    <scope>REVIEW</scope>
</reference>
<reference key="18">
    <citation type="journal article" date="2010" name="J. Biol. Chem.">
        <title>Mechanisms of activity and inhibition of the hepatitis C virus RNA-dependent RNA polymerase.</title>
        <authorList>
            <person name="Reich S."/>
            <person name="Golbik R.P."/>
            <person name="Geissler R."/>
            <person name="Lilie H."/>
            <person name="Behrens S.E."/>
        </authorList>
    </citation>
    <scope>FUNCTION (RNA-DIRECTED RNA POLYMERASE)</scope>
    <scope>CATALYTIC ACTIVITY (RNA-DIRECTED RNA POLYMERASE)</scope>
</reference>
<reference evidence="43" key="19">
    <citation type="journal article" date="1996" name="Cell">
        <title>The crystal structure of hepatitis C virus NS3 proteinase reveals a trypsin-like fold and a structural zinc binding site.</title>
        <authorList>
            <person name="Love R.A."/>
            <person name="Parge H.E."/>
            <person name="Wickersham J.A."/>
            <person name="Hostomsky Z."/>
            <person name="Habuka N."/>
            <person name="Moomaw E.W."/>
            <person name="Adachi T."/>
            <person name="Hostomska Z."/>
        </authorList>
    </citation>
    <scope>X-RAY CRYSTALLOGRAPHY (2.4 ANGSTROMS) OF 1027-1215 IN COMPLEX WITH ZINC</scope>
    <scope>ACTIVE SITE (SERINE PROTEASE/HELICASE NS3)</scope>
    <scope>COFACTOR (SERINE PROTEASE/HELICASE NS3)</scope>
</reference>
<reference evidence="50 51" key="20">
    <citation type="journal article" date="1998" name="Protein Sci.">
        <title>Complex of NS3 protease and NS4A peptide of BK strain hepatitis C virus: a 2.2-A resolution structure in a hexagonal crystal form.</title>
        <authorList>
            <person name="Yan Y."/>
            <person name="Li Y."/>
            <person name="Munshi S."/>
            <person name="Sardana V."/>
            <person name="Cole J.L."/>
            <person name="Sardana M."/>
            <person name="Steinkuehler C."/>
            <person name="Tomei L."/>
            <person name="de Francesco R."/>
            <person name="Kuo L.C."/>
            <person name="Chen Z."/>
        </authorList>
    </citation>
    <scope>X-RAY CRYSTALLOGRAPHY (2.2 ANGSTROMS) OF 1027-1206 AND 1678-1691</scope>
    <scope>INTERACTION WITH NON-STRUCTURAL PROTEIN 4A (SERINE PROTEASE/HELICASE NS3)</scope>
    <scope>INTERACTION WITH SERINE PROTEASE/HELICASE NS3 (NON-STRUCTURAL PROTEIN 4A)</scope>
    <scope>ACTIVE SITE (SERINE PROTEASE/HELICASE NS3)</scope>
</reference>
<reference evidence="53" key="21">
    <citation type="journal article" date="1998" name="J. Biol. Chem.">
        <title>Crystal structure of RNA helicase from genotype 1b hepatitis C virus. A feasible mechanism of unwinding duplex RNA.</title>
        <authorList>
            <person name="Cho H.-S."/>
            <person name="Ha N.-C."/>
            <person name="Kang L.-W."/>
            <person name="Chung K.M."/>
            <person name="Back S.H."/>
            <person name="Jang S.K."/>
            <person name="Oh B.-H."/>
        </authorList>
    </citation>
    <scope>X-RAY CRYSTALLOGRAPHY (2.3 ANGSTROMS) OF 1216-1650</scope>
    <scope>DOMAIN (SERINE PROTEASE/HELICASE NS3)</scope>
    <scope>RNA-BINDING (SERINE PROTEASE/HELICASE NS3)</scope>
    <scope>FUNCTION (SERINE PROTEASE/HELICASE NS3)</scope>
</reference>
<reference evidence="47" key="22">
    <citation type="journal article" date="1999" name="Structure">
        <title>Molecular views of viral polyprotein processing revealed by the crystal structure of the hepatitis C virus bifunctional protease-helicase.</title>
        <authorList>
            <person name="Yao N."/>
            <person name="Reichert P."/>
            <person name="Taremi S.S."/>
            <person name="Prosise W.W."/>
            <person name="Weber P.C."/>
        </authorList>
    </citation>
    <scope>X-RAY CRYSTALLOGRAPHY (2.5 ANGSTROMS) OF 1013-1657</scope>
</reference>
<reference evidence="44" key="23">
    <citation type="journal article" date="1999" name="J. Mol. Biol.">
        <title>The solution structure of the N-terminal proteinase domain of the hepatitis C virus (HCV) NS3 protein provides new insights into its activation and catalytic mechanism.</title>
        <authorList>
            <person name="Barbato G."/>
            <person name="Cicero D.O."/>
            <person name="Nardi M.C."/>
            <person name="Steinkuehler C."/>
            <person name="Cortese R."/>
            <person name="De Francesco R."/>
            <person name="Bazzo R."/>
        </authorList>
    </citation>
    <scope>STRUCTURE BY NMR OF 1027-1206 IN COMPLEX WITH ZINC</scope>
    <scope>INTERACTION WITH NON-STRUCTURAL PROTEIN 4A (SERINE PROTEASE/HELICASE NS3)</scope>
    <scope>INTERACTION WITH SERINE PROTEASE/HELICASE NS3 (NON-STRUCTURAL PROTEIN 4A)</scope>
</reference>
<reference evidence="46" key="24">
    <citation type="journal article" date="1999" name="Proc. Natl. Acad. Sci. U.S.A.">
        <title>Crystal structure of the RNA-dependent RNA polymerase of hepatitis C virus.</title>
        <authorList>
            <person name="Bressanelli S."/>
            <person name="Tomei L."/>
            <person name="Roussel A."/>
            <person name="Incitti I."/>
            <person name="Vitale R.L."/>
            <person name="Mathieu M."/>
            <person name="De Francesco R."/>
            <person name="Rey F.A."/>
        </authorList>
    </citation>
    <scope>X-RAY CRYSTALLOGRAPHY (2.8 ANGSTROMS) OF 2420-2950</scope>
</reference>
<reference evidence="45" key="25">
    <citation type="journal article" date="1999" name="Nat. Struct. Biol.">
        <title>Crystal structure of the RNA-dependent RNA polymerase from hepatitis C virus reveals a fully encircled active site.</title>
        <authorList>
            <person name="Lesburg C.A."/>
            <person name="Cable M.B."/>
            <person name="Ferrari E."/>
            <person name="Hong Z."/>
            <person name="Mannarino A.F."/>
            <person name="Weber P.C."/>
        </authorList>
    </citation>
    <scope>X-RAY CRYSTALLOGRAPHY (1.9 ANGSTROMS) OF 2414-2989</scope>
</reference>
<reference evidence="52" key="26">
    <citation type="journal article" date="1999" name="Structure">
        <title>Crystal structure of the RNA-dependent RNA polymerase of hepatitis C virus.</title>
        <authorList>
            <person name="Ago H."/>
            <person name="Adachi T."/>
            <person name="Yoshida A."/>
            <person name="Yamamoto M."/>
            <person name="Habuka N."/>
            <person name="Yatsunami K."/>
            <person name="Miyano M."/>
        </authorList>
    </citation>
    <scope>X-RAY CRYSTALLOGRAPHY (2.5 ANGSTROMS) OF 2420-2999</scope>
</reference>
<reference evidence="48 49" key="27">
    <citation type="journal article" date="2002" name="J. Virol.">
        <title>Structural analysis of the hepatitis C virus RNA polymerase in complex with ribonucleotides.</title>
        <authorList>
            <person name="Bressanelli S."/>
            <person name="Tomei L."/>
            <person name="Rey F.A."/>
            <person name="De Francesco R."/>
        </authorList>
    </citation>
    <scope>X-RAY CRYSTALLOGRAPHY (1.7 ANGSTROMS) OF 2420-2955 IN COMPLEX WITH GTP AND MANGANESE</scope>
    <scope>COFACTOR</scope>
</reference>
<dbReference type="EC" id="3.4.22.-" evidence="22 31"/>
<dbReference type="EC" id="3.4.21.98" evidence="5"/>
<dbReference type="EC" id="3.6.1.15" evidence="5"/>
<dbReference type="EC" id="3.6.4.13" evidence="5"/>
<dbReference type="EC" id="2.7.7.48" evidence="28 32"/>
<dbReference type="EMBL" id="M58335">
    <property type="protein sequence ID" value="AAA72945.1"/>
    <property type="molecule type" value="Genomic_RNA"/>
</dbReference>
<dbReference type="PIR" id="A38465">
    <property type="entry name" value="GNWVTC"/>
</dbReference>
<dbReference type="PDB" id="1A1Q">
    <property type="method" value="X-ray"/>
    <property type="resolution" value="2.40 A"/>
    <property type="chains" value="A/B/C=1027-1215"/>
</dbReference>
<dbReference type="PDB" id="1BT7">
    <property type="method" value="NMR"/>
    <property type="chains" value="A=1027-1206"/>
</dbReference>
<dbReference type="PDB" id="1C2P">
    <property type="method" value="X-ray"/>
    <property type="resolution" value="1.90 A"/>
    <property type="chains" value="A/B=2422-2989"/>
</dbReference>
<dbReference type="PDB" id="1CSJ">
    <property type="method" value="X-ray"/>
    <property type="resolution" value="2.80 A"/>
    <property type="chains" value="A/B=2420-2950"/>
</dbReference>
<dbReference type="PDB" id="1CU1">
    <property type="method" value="X-ray"/>
    <property type="resolution" value="2.50 A"/>
    <property type="chains" value="A/B=1029-1657"/>
</dbReference>
<dbReference type="PDB" id="1GX5">
    <property type="method" value="X-ray"/>
    <property type="resolution" value="1.70 A"/>
    <property type="chains" value="A=2420-2955"/>
</dbReference>
<dbReference type="PDB" id="1GX6">
    <property type="method" value="X-ray"/>
    <property type="resolution" value="1.85 A"/>
    <property type="chains" value="A=2420-2950"/>
</dbReference>
<dbReference type="PDB" id="1JXP">
    <property type="method" value="X-ray"/>
    <property type="resolution" value="2.20 A"/>
    <property type="chains" value="A/B=1027-1206, C/D=1678-1691"/>
</dbReference>
<dbReference type="PDB" id="1NHU">
    <property type="method" value="X-ray"/>
    <property type="resolution" value="2.00 A"/>
    <property type="chains" value="A/B=2420-2989"/>
</dbReference>
<dbReference type="PDB" id="1NHV">
    <property type="method" value="X-ray"/>
    <property type="resolution" value="2.90 A"/>
    <property type="chains" value="A/B=2420-2989"/>
</dbReference>
<dbReference type="PDB" id="1NS3">
    <property type="method" value="X-ray"/>
    <property type="resolution" value="2.80 A"/>
    <property type="chains" value="A/B=1029-1206, C/D=1678-1689"/>
</dbReference>
<dbReference type="PDB" id="1OS5">
    <property type="method" value="X-ray"/>
    <property type="resolution" value="2.20 A"/>
    <property type="chains" value="A=2420-2989"/>
</dbReference>
<dbReference type="PDB" id="1QUV">
    <property type="method" value="X-ray"/>
    <property type="resolution" value="2.50 A"/>
    <property type="chains" value="A=2420-2989"/>
</dbReference>
<dbReference type="PDB" id="2AWZ">
    <property type="method" value="X-ray"/>
    <property type="resolution" value="2.15 A"/>
    <property type="chains" value="A/B=2420-2989"/>
</dbReference>
<dbReference type="PDB" id="2AX0">
    <property type="method" value="X-ray"/>
    <property type="resolution" value="2.00 A"/>
    <property type="chains" value="A/B=2420-2989"/>
</dbReference>
<dbReference type="PDB" id="2AX1">
    <property type="method" value="X-ray"/>
    <property type="resolution" value="2.10 A"/>
    <property type="chains" value="A/B=2420-2989"/>
</dbReference>
<dbReference type="PDB" id="2BRK">
    <property type="method" value="X-ray"/>
    <property type="resolution" value="2.30 A"/>
    <property type="chains" value="A=2420-2955"/>
</dbReference>
<dbReference type="PDB" id="2BRL">
    <property type="method" value="X-ray"/>
    <property type="resolution" value="2.40 A"/>
    <property type="chains" value="A=2420-2955"/>
</dbReference>
<dbReference type="PDB" id="2DXS">
    <property type="method" value="X-ray"/>
    <property type="resolution" value="2.20 A"/>
    <property type="chains" value="A/B=2420-2963"/>
</dbReference>
<dbReference type="PDB" id="2GIQ">
    <property type="method" value="X-ray"/>
    <property type="resolution" value="1.65 A"/>
    <property type="chains" value="A/B=2421-2981"/>
</dbReference>
<dbReference type="PDB" id="2GIR">
    <property type="method" value="X-ray"/>
    <property type="resolution" value="1.90 A"/>
    <property type="chains" value="A/B=2421-2981"/>
</dbReference>
<dbReference type="PDB" id="2HAI">
    <property type="method" value="X-ray"/>
    <property type="resolution" value="1.58 A"/>
    <property type="chains" value="A=2420-2988"/>
</dbReference>
<dbReference type="PDB" id="2HWH">
    <property type="method" value="X-ray"/>
    <property type="resolution" value="2.30 A"/>
    <property type="chains" value="A/B=2422-2989"/>
</dbReference>
<dbReference type="PDB" id="2HWI">
    <property type="method" value="X-ray"/>
    <property type="resolution" value="2.00 A"/>
    <property type="chains" value="A/B=2422-2989"/>
</dbReference>
<dbReference type="PDB" id="2I1R">
    <property type="method" value="X-ray"/>
    <property type="resolution" value="2.20 A"/>
    <property type="chains" value="A/B=2422-2989"/>
</dbReference>
<dbReference type="PDB" id="2JC0">
    <property type="method" value="X-ray"/>
    <property type="resolution" value="2.20 A"/>
    <property type="chains" value="A/B=2420-2989"/>
</dbReference>
<dbReference type="PDB" id="2JC1">
    <property type="method" value="X-ray"/>
    <property type="resolution" value="2.00 A"/>
    <property type="chains" value="A/B=2420-2989"/>
</dbReference>
<dbReference type="PDB" id="2O5D">
    <property type="method" value="X-ray"/>
    <property type="resolution" value="2.20 A"/>
    <property type="chains" value="A/B=2422-2989"/>
</dbReference>
<dbReference type="PDB" id="2WCX">
    <property type="method" value="X-ray"/>
    <property type="resolution" value="2.00 A"/>
    <property type="chains" value="A=2420-2955"/>
</dbReference>
<dbReference type="PDB" id="2WHO">
    <property type="method" value="X-ray"/>
    <property type="resolution" value="2.00 A"/>
    <property type="chains" value="A/B=2420-2955"/>
</dbReference>
<dbReference type="PDB" id="2WRM">
    <property type="method" value="X-ray"/>
    <property type="resolution" value="1.95 A"/>
    <property type="chains" value="A=2420-2955"/>
</dbReference>
<dbReference type="PDB" id="2XWY">
    <property type="method" value="X-ray"/>
    <property type="resolution" value="2.53 A"/>
    <property type="chains" value="A=2420-2955"/>
</dbReference>
<dbReference type="PDB" id="2ZKU">
    <property type="method" value="X-ray"/>
    <property type="resolution" value="1.95 A"/>
    <property type="chains" value="A/B/C/D=2420-2989"/>
</dbReference>
<dbReference type="PDB" id="3BR9">
    <property type="method" value="X-ray"/>
    <property type="resolution" value="2.30 A"/>
    <property type="chains" value="A/B=2420-2989"/>
</dbReference>
<dbReference type="PDB" id="3BSA">
    <property type="method" value="X-ray"/>
    <property type="resolution" value="2.30 A"/>
    <property type="chains" value="A/B=2420-2989"/>
</dbReference>
<dbReference type="PDB" id="3BSC">
    <property type="method" value="X-ray"/>
    <property type="resolution" value="2.65 A"/>
    <property type="chains" value="A/B=2420-2989"/>
</dbReference>
<dbReference type="PDB" id="3CDE">
    <property type="method" value="X-ray"/>
    <property type="resolution" value="2.10 A"/>
    <property type="chains" value="A/B=2420-2989"/>
</dbReference>
<dbReference type="PDB" id="3CIZ">
    <property type="method" value="X-ray"/>
    <property type="resolution" value="1.87 A"/>
    <property type="chains" value="A/B=2421-2989"/>
</dbReference>
<dbReference type="PDB" id="3CJ0">
    <property type="method" value="X-ray"/>
    <property type="resolution" value="1.90 A"/>
    <property type="chains" value="A/B=2421-2989"/>
</dbReference>
<dbReference type="PDB" id="3CJ2">
    <property type="method" value="X-ray"/>
    <property type="resolution" value="1.75 A"/>
    <property type="chains" value="A/B=2421-2989"/>
</dbReference>
<dbReference type="PDB" id="3CJ3">
    <property type="method" value="X-ray"/>
    <property type="resolution" value="1.87 A"/>
    <property type="chains" value="A/B=2421-2989"/>
</dbReference>
<dbReference type="PDB" id="3CJ4">
    <property type="method" value="X-ray"/>
    <property type="resolution" value="2.07 A"/>
    <property type="chains" value="A/B=2421-2989"/>
</dbReference>
<dbReference type="PDB" id="3CJ5">
    <property type="method" value="X-ray"/>
    <property type="resolution" value="1.92 A"/>
    <property type="chains" value="A/B=2421-2989"/>
</dbReference>
<dbReference type="PDB" id="3CO9">
    <property type="method" value="X-ray"/>
    <property type="resolution" value="2.10 A"/>
    <property type="chains" value="A/B=2420-2989"/>
</dbReference>
<dbReference type="PDB" id="3CVK">
    <property type="method" value="X-ray"/>
    <property type="resolution" value="2.31 A"/>
    <property type="chains" value="A/B=2420-2989"/>
</dbReference>
<dbReference type="PDB" id="3CWJ">
    <property type="method" value="X-ray"/>
    <property type="resolution" value="2.40 A"/>
    <property type="chains" value="A/B=2420-2989"/>
</dbReference>
<dbReference type="PDB" id="3D28">
    <property type="method" value="X-ray"/>
    <property type="resolution" value="2.30 A"/>
    <property type="chains" value="A/B=2420-2989"/>
</dbReference>
<dbReference type="PDB" id="3D5M">
    <property type="method" value="X-ray"/>
    <property type="resolution" value="2.20 A"/>
    <property type="chains" value="A/B=2420-2989"/>
</dbReference>
<dbReference type="PDB" id="3E51">
    <property type="method" value="X-ray"/>
    <property type="resolution" value="1.90 A"/>
    <property type="chains" value="A/B=2420-2989"/>
</dbReference>
<dbReference type="PDB" id="3FQK">
    <property type="method" value="X-ray"/>
    <property type="resolution" value="2.20 A"/>
    <property type="chains" value="A/B=2421-2989"/>
</dbReference>
<dbReference type="PDB" id="3FRZ">
    <property type="method" value="X-ray"/>
    <property type="resolution" value="1.86 A"/>
    <property type="chains" value="A=2420-2989"/>
</dbReference>
<dbReference type="PDB" id="3G86">
    <property type="method" value="X-ray"/>
    <property type="resolution" value="2.20 A"/>
    <property type="chains" value="A/B=2421-2989"/>
</dbReference>
<dbReference type="PDB" id="3GYN">
    <property type="method" value="X-ray"/>
    <property type="resolution" value="2.15 A"/>
    <property type="chains" value="A/B=2420-2989"/>
</dbReference>
<dbReference type="PDB" id="3H2L">
    <property type="method" value="X-ray"/>
    <property type="resolution" value="1.90 A"/>
    <property type="chains" value="A/B=2420-2989"/>
</dbReference>
<dbReference type="PDB" id="3H59">
    <property type="method" value="X-ray"/>
    <property type="resolution" value="2.10 A"/>
    <property type="chains" value="A/B=2421-2989"/>
</dbReference>
<dbReference type="PDB" id="3H5S">
    <property type="method" value="X-ray"/>
    <property type="resolution" value="2.00 A"/>
    <property type="chains" value="A/B=2421-2989"/>
</dbReference>
<dbReference type="PDB" id="3H5U">
    <property type="method" value="X-ray"/>
    <property type="resolution" value="1.95 A"/>
    <property type="chains" value="A/B=2421-2989"/>
</dbReference>
<dbReference type="PDB" id="3H98">
    <property type="method" value="X-ray"/>
    <property type="resolution" value="1.90 A"/>
    <property type="chains" value="A/B=2421-2989"/>
</dbReference>
<dbReference type="PDB" id="3IGV">
    <property type="method" value="X-ray"/>
    <property type="resolution" value="2.60 A"/>
    <property type="chains" value="A/B=2420-2989"/>
</dbReference>
<dbReference type="PDB" id="3MF5">
    <property type="method" value="X-ray"/>
    <property type="resolution" value="2.00 A"/>
    <property type="chains" value="A/B=2421-2989"/>
</dbReference>
<dbReference type="PDB" id="3RVB">
    <property type="method" value="X-ray"/>
    <property type="resolution" value="2.20 A"/>
    <property type="chains" value="A=1186-1657"/>
</dbReference>
<dbReference type="PDB" id="3UA7">
    <property type="method" value="X-ray"/>
    <property type="resolution" value="1.50 A"/>
    <property type="chains" value="E/F=2321-2331"/>
</dbReference>
<dbReference type="PDB" id="3UDL">
    <property type="method" value="X-ray"/>
    <property type="resolution" value="2.17 A"/>
    <property type="chains" value="A/B/C/D=2420-2989"/>
</dbReference>
<dbReference type="PDB" id="3VQS">
    <property type="method" value="X-ray"/>
    <property type="resolution" value="1.90 A"/>
    <property type="chains" value="A/B/C/D=2420-2989"/>
</dbReference>
<dbReference type="PDB" id="4A92">
    <property type="method" value="X-ray"/>
    <property type="resolution" value="2.73 A"/>
    <property type="chains" value="A/B=1029-1657, A/B=1678-1690"/>
</dbReference>
<dbReference type="PDB" id="4B6E">
    <property type="method" value="X-ray"/>
    <property type="resolution" value="2.46 A"/>
    <property type="chains" value="A/B=1029-1657"/>
</dbReference>
<dbReference type="PDB" id="4B6F">
    <property type="method" value="X-ray"/>
    <property type="resolution" value="2.89 A"/>
    <property type="chains" value="A/B=1029-1657"/>
</dbReference>
<dbReference type="PDB" id="4B71">
    <property type="method" value="X-ray"/>
    <property type="resolution" value="2.50 A"/>
    <property type="chains" value="A/B=1029-1657"/>
</dbReference>
<dbReference type="PDB" id="4B73">
    <property type="method" value="X-ray"/>
    <property type="resolution" value="2.50 A"/>
    <property type="chains" value="A/B=1029-1657"/>
</dbReference>
<dbReference type="PDB" id="4B74">
    <property type="method" value="X-ray"/>
    <property type="resolution" value="2.18 A"/>
    <property type="chains" value="A/B=1029-1657"/>
</dbReference>
<dbReference type="PDB" id="4B75">
    <property type="method" value="X-ray"/>
    <property type="resolution" value="2.53 A"/>
    <property type="chains" value="A/B=1029-1655"/>
</dbReference>
<dbReference type="PDB" id="4B76">
    <property type="method" value="X-ray"/>
    <property type="resolution" value="2.14 A"/>
    <property type="chains" value="A/B=1029-1657"/>
</dbReference>
<dbReference type="PDB" id="4DGV">
    <property type="method" value="X-ray"/>
    <property type="resolution" value="1.80 A"/>
    <property type="chains" value="A=412-423"/>
</dbReference>
<dbReference type="PDB" id="4DGY">
    <property type="method" value="X-ray"/>
    <property type="resolution" value="1.80 A"/>
    <property type="chains" value="A=412-423"/>
</dbReference>
<dbReference type="PDB" id="4EO6">
    <property type="method" value="X-ray"/>
    <property type="resolution" value="1.79 A"/>
    <property type="chains" value="A/B=2422-2989"/>
</dbReference>
<dbReference type="PDB" id="4EO8">
    <property type="method" value="X-ray"/>
    <property type="resolution" value="1.80 A"/>
    <property type="chains" value="A/B=2422-2989"/>
</dbReference>
<dbReference type="PDB" id="4IH5">
    <property type="method" value="X-ray"/>
    <property type="resolution" value="1.90 A"/>
    <property type="chains" value="A/B=2421-2989"/>
</dbReference>
<dbReference type="PDB" id="4IH6">
    <property type="method" value="X-ray"/>
    <property type="resolution" value="2.20 A"/>
    <property type="chains" value="A/B=2421-2989"/>
</dbReference>
<dbReference type="PDB" id="4IH7">
    <property type="method" value="X-ray"/>
    <property type="resolution" value="2.30 A"/>
    <property type="chains" value="A/B=2421-2989"/>
</dbReference>
<dbReference type="PDB" id="4K8B">
    <property type="method" value="X-ray"/>
    <property type="resolution" value="2.80 A"/>
    <property type="chains" value="C/D=1678-1689"/>
</dbReference>
<dbReference type="PDB" id="4KAI">
    <property type="method" value="X-ray"/>
    <property type="resolution" value="2.30 A"/>
    <property type="chains" value="A/B=2420-2989"/>
</dbReference>
<dbReference type="PDB" id="4KB7">
    <property type="method" value="X-ray"/>
    <property type="resolution" value="1.85 A"/>
    <property type="chains" value="A/B=2420-2989"/>
</dbReference>
<dbReference type="PDB" id="4KBI">
    <property type="method" value="X-ray"/>
    <property type="resolution" value="2.06 A"/>
    <property type="chains" value="A/B=2420-2989"/>
</dbReference>
<dbReference type="PDB" id="4KE5">
    <property type="method" value="X-ray"/>
    <property type="resolution" value="2.11 A"/>
    <property type="chains" value="A/B=2420-2989"/>
</dbReference>
<dbReference type="PDB" id="4MIA">
    <property type="method" value="X-ray"/>
    <property type="resolution" value="2.80 A"/>
    <property type="chains" value="A/B=2421-2989"/>
</dbReference>
<dbReference type="PDB" id="4MIB">
    <property type="method" value="X-ray"/>
    <property type="resolution" value="2.30 A"/>
    <property type="chains" value="A/B=2421-2989"/>
</dbReference>
<dbReference type="PDB" id="4MK7">
    <property type="method" value="X-ray"/>
    <property type="resolution" value="2.80 A"/>
    <property type="chains" value="A/B=2421-2989"/>
</dbReference>
<dbReference type="PDB" id="4MK8">
    <property type="method" value="X-ray"/>
    <property type="resolution" value="2.09 A"/>
    <property type="chains" value="A/B=2421-2989"/>
</dbReference>
<dbReference type="PDB" id="4MK9">
    <property type="method" value="X-ray"/>
    <property type="resolution" value="2.05 A"/>
    <property type="chains" value="A/B=2421-2989"/>
</dbReference>
<dbReference type="PDB" id="4MKA">
    <property type="method" value="X-ray"/>
    <property type="resolution" value="2.05 A"/>
    <property type="chains" value="A/B=2421-2989"/>
</dbReference>
<dbReference type="PDB" id="4MKB">
    <property type="method" value="X-ray"/>
    <property type="resolution" value="1.90 A"/>
    <property type="chains" value="A/B=2421-2989"/>
</dbReference>
<dbReference type="PDB" id="4TN2">
    <property type="method" value="X-ray"/>
    <property type="resolution" value="2.70 A"/>
    <property type="chains" value="A=2422-2989"/>
</dbReference>
<dbReference type="PDB" id="4WXP">
    <property type="method" value="X-ray"/>
    <property type="resolution" value="2.08 A"/>
    <property type="chains" value="A=1206-1656"/>
</dbReference>
<dbReference type="PDB" id="5FPS">
    <property type="method" value="X-ray"/>
    <property type="resolution" value="2.68 A"/>
    <property type="chains" value="A/B=1029-1657"/>
</dbReference>
<dbReference type="PDB" id="5FPT">
    <property type="method" value="X-ray"/>
    <property type="resolution" value="2.72 A"/>
    <property type="chains" value="A/B=1029-1657"/>
</dbReference>
<dbReference type="PDB" id="5FPY">
    <property type="method" value="X-ray"/>
    <property type="resolution" value="2.52 A"/>
    <property type="chains" value="A/B=1029-1657"/>
</dbReference>
<dbReference type="PDB" id="5KZP">
    <property type="method" value="X-ray"/>
    <property type="resolution" value="2.26 A"/>
    <property type="chains" value="A/B/C/D=412-423"/>
</dbReference>
<dbReference type="PDB" id="5W2E">
    <property type="method" value="X-ray"/>
    <property type="resolution" value="2.80 A"/>
    <property type="chains" value="A/B=2422-2989"/>
</dbReference>
<dbReference type="PDB" id="6MVP">
    <property type="method" value="X-ray"/>
    <property type="resolution" value="2.00 A"/>
    <property type="chains" value="A/B=2420-2989"/>
</dbReference>
<dbReference type="PDB" id="6W4G">
    <property type="method" value="X-ray"/>
    <property type="resolution" value="1.95 A"/>
    <property type="chains" value="A/B=2421-2981"/>
</dbReference>
<dbReference type="PDB" id="8OHM">
    <property type="method" value="X-ray"/>
    <property type="resolution" value="2.30 A"/>
    <property type="chains" value="A=1216-1650"/>
</dbReference>
<dbReference type="PDBsum" id="1A1Q"/>
<dbReference type="PDBsum" id="1BT7"/>
<dbReference type="PDBsum" id="1C2P"/>
<dbReference type="PDBsum" id="1CSJ"/>
<dbReference type="PDBsum" id="1CU1"/>
<dbReference type="PDBsum" id="1GX5"/>
<dbReference type="PDBsum" id="1GX6"/>
<dbReference type="PDBsum" id="1JXP"/>
<dbReference type="PDBsum" id="1NHU"/>
<dbReference type="PDBsum" id="1NHV"/>
<dbReference type="PDBsum" id="1NS3"/>
<dbReference type="PDBsum" id="1OS5"/>
<dbReference type="PDBsum" id="1QUV"/>
<dbReference type="PDBsum" id="2AWZ"/>
<dbReference type="PDBsum" id="2AX0"/>
<dbReference type="PDBsum" id="2AX1"/>
<dbReference type="PDBsum" id="2BRK"/>
<dbReference type="PDBsum" id="2BRL"/>
<dbReference type="PDBsum" id="2DXS"/>
<dbReference type="PDBsum" id="2GIQ"/>
<dbReference type="PDBsum" id="2GIR"/>
<dbReference type="PDBsum" id="2HAI"/>
<dbReference type="PDBsum" id="2HWH"/>
<dbReference type="PDBsum" id="2HWI"/>
<dbReference type="PDBsum" id="2I1R"/>
<dbReference type="PDBsum" id="2JC0"/>
<dbReference type="PDBsum" id="2JC1"/>
<dbReference type="PDBsum" id="2O5D"/>
<dbReference type="PDBsum" id="2WCX"/>
<dbReference type="PDBsum" id="2WHO"/>
<dbReference type="PDBsum" id="2WRM"/>
<dbReference type="PDBsum" id="2XWY"/>
<dbReference type="PDBsum" id="2ZKU"/>
<dbReference type="PDBsum" id="3BR9"/>
<dbReference type="PDBsum" id="3BSA"/>
<dbReference type="PDBsum" id="3BSC"/>
<dbReference type="PDBsum" id="3CDE"/>
<dbReference type="PDBsum" id="3CIZ"/>
<dbReference type="PDBsum" id="3CJ0"/>
<dbReference type="PDBsum" id="3CJ2"/>
<dbReference type="PDBsum" id="3CJ3"/>
<dbReference type="PDBsum" id="3CJ4"/>
<dbReference type="PDBsum" id="3CJ5"/>
<dbReference type="PDBsum" id="3CO9"/>
<dbReference type="PDBsum" id="3CVK"/>
<dbReference type="PDBsum" id="3CWJ"/>
<dbReference type="PDBsum" id="3D28"/>
<dbReference type="PDBsum" id="3D5M"/>
<dbReference type="PDBsum" id="3E51"/>
<dbReference type="PDBsum" id="3FQK"/>
<dbReference type="PDBsum" id="3FRZ"/>
<dbReference type="PDBsum" id="3G86"/>
<dbReference type="PDBsum" id="3GYN"/>
<dbReference type="PDBsum" id="3H2L"/>
<dbReference type="PDBsum" id="3H59"/>
<dbReference type="PDBsum" id="3H5S"/>
<dbReference type="PDBsum" id="3H5U"/>
<dbReference type="PDBsum" id="3H98"/>
<dbReference type="PDBsum" id="3IGV"/>
<dbReference type="PDBsum" id="3MF5"/>
<dbReference type="PDBsum" id="3RVB"/>
<dbReference type="PDBsum" id="3UA7"/>
<dbReference type="PDBsum" id="3UDL"/>
<dbReference type="PDBsum" id="3VQS"/>
<dbReference type="PDBsum" id="4A92"/>
<dbReference type="PDBsum" id="4B6E"/>
<dbReference type="PDBsum" id="4B6F"/>
<dbReference type="PDBsum" id="4B71"/>
<dbReference type="PDBsum" id="4B73"/>
<dbReference type="PDBsum" id="4B74"/>
<dbReference type="PDBsum" id="4B75"/>
<dbReference type="PDBsum" id="4B76"/>
<dbReference type="PDBsum" id="4DGV"/>
<dbReference type="PDBsum" id="4DGY"/>
<dbReference type="PDBsum" id="4EO6"/>
<dbReference type="PDBsum" id="4EO8"/>
<dbReference type="PDBsum" id="4IH5"/>
<dbReference type="PDBsum" id="4IH6"/>
<dbReference type="PDBsum" id="4IH7"/>
<dbReference type="PDBsum" id="4K8B"/>
<dbReference type="PDBsum" id="4KAI"/>
<dbReference type="PDBsum" id="4KB7"/>
<dbReference type="PDBsum" id="4KBI"/>
<dbReference type="PDBsum" id="4KE5"/>
<dbReference type="PDBsum" id="4MIA"/>
<dbReference type="PDBsum" id="4MIB"/>
<dbReference type="PDBsum" id="4MK7"/>
<dbReference type="PDBsum" id="4MK8"/>
<dbReference type="PDBsum" id="4MK9"/>
<dbReference type="PDBsum" id="4MKA"/>
<dbReference type="PDBsum" id="4MKB"/>
<dbReference type="PDBsum" id="4TN2"/>
<dbReference type="PDBsum" id="4WXP"/>
<dbReference type="PDBsum" id="5FPS"/>
<dbReference type="PDBsum" id="5FPT"/>
<dbReference type="PDBsum" id="5FPY"/>
<dbReference type="PDBsum" id="5KZP"/>
<dbReference type="PDBsum" id="5W2E"/>
<dbReference type="PDBsum" id="6MVP"/>
<dbReference type="PDBsum" id="6W4G"/>
<dbReference type="PDBsum" id="8OHM"/>
<dbReference type="BMRB" id="P26663"/>
<dbReference type="SASBDB" id="P26663"/>
<dbReference type="SMR" id="P26663"/>
<dbReference type="IntAct" id="P26663">
    <property type="interactions" value="6"/>
</dbReference>
<dbReference type="MINT" id="P26663"/>
<dbReference type="BindingDB" id="P26663"/>
<dbReference type="ChEMBL" id="CHEMBL6040"/>
<dbReference type="DrugBank" id="DB08706">
    <property type="generic name" value="(2S)-({(5Z)-5-[(5-Ethyl-2-furyl)methylene]-4-oxo-4,5-dihydro-1,3-thiazol-2-yl}amino)(4-fluorophenyl)acetic acid"/>
</dbReference>
<dbReference type="DrugBank" id="DB03605">
    <property type="generic name" value="(2s)-2-[(2,4-Dichloro-Benzoyl)-(3-Trifluoromethyl-Benzyl)-Amino]-3-Phenyl-Propionic Acid"/>
</dbReference>
<dbReference type="DrugBank" id="DB02331">
    <property type="generic name" value="(2s)-2-[(5-Benzofuran-2-Yl-Thiophen-2-Ylmethyl)-(2,4-Dichloro-Benzoyl)-Amino]-3-Phenyl-Propionic Acid"/>
</dbReference>
<dbReference type="DrugBank" id="DB07199">
    <property type="generic name" value="(2S,4S,5R)-1-(4-TERT-BUTYLBENZOYL)-2-ISOBUTYL-5-(1,3-THIAZOL-2-YL)PYRROLIDINE-2,4-DICARBOXYLIC ACID"/>
</dbReference>
<dbReference type="DrugBank" id="DB07200">
    <property type="generic name" value="(2S,4S,5R)-2-ISOBUTYL-5-(2-THIENYL)-1-[4-(TRIFLUOROMETHYL)BENZOYL]PYRROLIDINE-2,4-DICARBOXYLIC ACID"/>
</dbReference>
<dbReference type="DrugBank" id="DB07414">
    <property type="generic name" value="(5S)-1-benzyl-3-(1,1-dioxido-1,2-benzisothiazol-3-yl)-4-hydroxy-5-(1-methylethyl)-1,5-dihydro-2H-pyrrol-2-one"/>
</dbReference>
<dbReference type="DrugBank" id="DB08710">
    <property type="generic name" value="(5Z)-5-[(5-ethylfuran-2-yl)methylidene]-2-[[(S)-(4-fluorophenyl)-(2H-tetrazol-5-yl)methyl]amino]-1,3-thiazol-4-one"/>
</dbReference>
<dbReference type="DrugBank" id="DB08390">
    <property type="generic name" value="(6S)-6-CYCLOPENTYL-6-[2-(3-FLUORO-4-ISOPROPOXYPHENYL)ETHYL]-4-HYDROXY-5,6-DIHYDRO-2H-PYRAN-2-ONE"/>
</dbReference>
<dbReference type="DrugBank" id="DB08278">
    <property type="generic name" value="1-(2-cyclopropylethyl)-3-(1,1-dioxo-2H-1,2,4-benzothiadiazin-3-yl)-6-fluoro-4-hydroxy-2(1H)-quinolinone"/>
</dbReference>
<dbReference type="DrugBank" id="DB08701">
    <property type="generic name" value="2-(3-BROMOPHENYL)-6-[(2-HYDROXYETHYL)AMINO]-1H-BENZO[DE]ISOQUINOLINE-1,3(2H)-DIONE"/>
</dbReference>
<dbReference type="DrugBank" id="DB04298">
    <property type="generic name" value="3-(4-Amino-2-Tert-Butyl-5-Methyl-Phenylsulfanyl)-6-Cyclopentyl-4-Hydroxy-6-[2-(4-Hydroxy-Phenyl)-Ethyl]-5,6-Dihydro-Pyran-2-One"/>
</dbReference>
<dbReference type="DrugBank" id="DB07570">
    <property type="generic name" value="3-CYCLOHEXYL-1-(2-MORPHOLIN-4-YL-2-OXOETHYL)-2-PHENYL-1H-INDOLE-6-CARBOXYLIC ACID"/>
</dbReference>
<dbReference type="DrugBank" id="DB08279">
    <property type="generic name" value="3-{ISOPROPYL[(TRANS-4-METHYLCYCLOHEXYL)CARBONYL]AMINO}-5-PHENYLTHIOPHENE-2-CARBOXYLIC ACID"/>
</dbReference>
<dbReference type="DrugBank" id="DB08581">
    <property type="generic name" value="4-[(4-bromo-2-{[(3R,5S)-3,5-dimethylpiperidin-1-yl]carbonyl}phenyl)amino]-4-oxobutanoic acid"/>
</dbReference>
<dbReference type="DrugBank" id="DB08578">
    <property type="generic name" value="4-[(5-bromopyridin-2-yl)amino]-4-oxobutanoic acid"/>
</dbReference>
<dbReference type="DrugBank" id="DB08580">
    <property type="generic name" value="4-bromo-2-{[(2R)-2-(2-chlorobenzyl)pyrrolidin-1-yl]carbonyl}aniline"/>
</dbReference>
<dbReference type="DrugBank" id="DB08579">
    <property type="generic name" value="4-bromo-2-{[(3R,5S)-3,5-dimethylpiperidin-1-yl]carbonyl}aniline"/>
</dbReference>
<dbReference type="DrugBank" id="DB08481">
    <property type="generic name" value="4-Methyl-N-[5-(5-methyl-furan-2-ylmethylene)-4-oxo-thiazolidin-2-ylidene]-benzenesulfonamide"/>
</dbReference>
<dbReference type="DrugBank" id="DB06974">
    <property type="generic name" value="5-hydroxy-4-(7-methoxy-1,1-dioxido-2H-1,2,4-benzothiadiazin-3-yl)-2-(3-methylbutyl)-6-phenylpyridazin-3(2H)-one"/>
</dbReference>
<dbReference type="DrugBank" id="DB07169">
    <property type="generic name" value="5R-(3,4-DICHLOROPHENYLMETHYL)-3-(2-THIOPHENESULFONYLAMINO)-4-OXO-2-THIONOTHIAZOLIDINE"/>
</dbReference>
<dbReference type="DrugBank" id="DB11586">
    <property type="generic name" value="Asunaprevir"/>
</dbReference>
<dbReference type="DrugBank" id="DB04137">
    <property type="generic name" value="Guanosine-5'-Triphosphate"/>
</dbReference>
<dbReference type="DrugBank" id="DB08582">
    <property type="generic name" value="N-(4-bromo-2-{[(3R,5S)-3,5-dimethylpiperidin-1-yl]carbonyl}phenyl)-4-morpholin-4-yl-4-oxobutanamide"/>
</dbReference>
<dbReference type="DrugBank" id="DB08031">
    <property type="generic name" value="N-[(13-CYCLOHEXYL-6,7-DIHYDROINDOLO[1,2-D][1,4]BENZOXAZEPIN-10-YL)CARBONYL]-2-METHYL-L-ALANINE"/>
</dbReference>
<dbReference type="DrugBank" id="DB07062">
    <property type="generic name" value="N-{3-[4-Hydroxy-1-(3-methylbutyl)-2-oxo-1,2-dihydropyrrolo[1,2-b]pyridazin-3-yl]-1,1-dioxido-2H-1,2,4-benzothiadiazin-7-yl}methanesulfonamide"/>
</dbReference>
<dbReference type="DrugBank" id="DB07238">
    <property type="generic name" value="Nesbuvir"/>
</dbReference>
<dbReference type="DrugBank" id="DB04005">
    <property type="generic name" value="Uridine 5'-triphosphate"/>
</dbReference>
<dbReference type="DrugCentral" id="P26663"/>
<dbReference type="MEROPS" id="S29.001"/>
<dbReference type="iPTMnet" id="P26663"/>
<dbReference type="ABCD" id="P26663">
    <property type="antibodies" value="5 sequenced antibodies"/>
</dbReference>
<dbReference type="euHCVdb" id="M58335"/>
<dbReference type="BRENDA" id="3.4.21.98">
    <property type="organism ID" value="17002"/>
</dbReference>
<dbReference type="EvolutionaryTrace" id="P26663"/>
<dbReference type="Proteomes" id="UP000007413">
    <property type="component" value="Segment"/>
</dbReference>
<dbReference type="GO" id="GO:0044167">
    <property type="term" value="C:host cell endoplasmic reticulum membrane"/>
    <property type="evidence" value="ECO:0007669"/>
    <property type="project" value="UniProtKB-SubCell"/>
</dbReference>
<dbReference type="GO" id="GO:0044186">
    <property type="term" value="C:host cell lipid droplet"/>
    <property type="evidence" value="ECO:0007669"/>
    <property type="project" value="UniProtKB-SubCell"/>
</dbReference>
<dbReference type="GO" id="GO:0044191">
    <property type="term" value="C:host cell mitochondrial membrane"/>
    <property type="evidence" value="ECO:0007669"/>
    <property type="project" value="UniProtKB-SubCell"/>
</dbReference>
<dbReference type="GO" id="GO:0042025">
    <property type="term" value="C:host cell nucleus"/>
    <property type="evidence" value="ECO:0007669"/>
    <property type="project" value="UniProtKB-SubCell"/>
</dbReference>
<dbReference type="GO" id="GO:0044220">
    <property type="term" value="C:host cell perinuclear region of cytoplasm"/>
    <property type="evidence" value="ECO:0007669"/>
    <property type="project" value="UniProtKB-SubCell"/>
</dbReference>
<dbReference type="GO" id="GO:0020002">
    <property type="term" value="C:host cell plasma membrane"/>
    <property type="evidence" value="ECO:0007669"/>
    <property type="project" value="UniProtKB-SubCell"/>
</dbReference>
<dbReference type="GO" id="GO:0016020">
    <property type="term" value="C:membrane"/>
    <property type="evidence" value="ECO:0007669"/>
    <property type="project" value="UniProtKB-KW"/>
</dbReference>
<dbReference type="GO" id="GO:1990904">
    <property type="term" value="C:ribonucleoprotein complex"/>
    <property type="evidence" value="ECO:0007669"/>
    <property type="project" value="UniProtKB-KW"/>
</dbReference>
<dbReference type="GO" id="GO:0019031">
    <property type="term" value="C:viral envelope"/>
    <property type="evidence" value="ECO:0007669"/>
    <property type="project" value="UniProtKB-KW"/>
</dbReference>
<dbReference type="GO" id="GO:0019013">
    <property type="term" value="C:viral nucleocapsid"/>
    <property type="evidence" value="ECO:0007669"/>
    <property type="project" value="UniProtKB-KW"/>
</dbReference>
<dbReference type="GO" id="GO:0055036">
    <property type="term" value="C:virion membrane"/>
    <property type="evidence" value="ECO:0007669"/>
    <property type="project" value="UniProtKB-SubCell"/>
</dbReference>
<dbReference type="GO" id="GO:0005524">
    <property type="term" value="F:ATP binding"/>
    <property type="evidence" value="ECO:0007669"/>
    <property type="project" value="UniProtKB-KW"/>
</dbReference>
<dbReference type="GO" id="GO:0016887">
    <property type="term" value="F:ATP hydrolysis activity"/>
    <property type="evidence" value="ECO:0007669"/>
    <property type="project" value="RHEA"/>
</dbReference>
<dbReference type="GO" id="GO:0015267">
    <property type="term" value="F:channel activity"/>
    <property type="evidence" value="ECO:0007669"/>
    <property type="project" value="UniProtKB-KW"/>
</dbReference>
<dbReference type="GO" id="GO:0004197">
    <property type="term" value="F:cysteine-type endopeptidase activity"/>
    <property type="evidence" value="ECO:0007669"/>
    <property type="project" value="InterPro"/>
</dbReference>
<dbReference type="GO" id="GO:0003723">
    <property type="term" value="F:RNA binding"/>
    <property type="evidence" value="ECO:0007669"/>
    <property type="project" value="UniProtKB-KW"/>
</dbReference>
<dbReference type="GO" id="GO:0003724">
    <property type="term" value="F:RNA helicase activity"/>
    <property type="evidence" value="ECO:0007669"/>
    <property type="project" value="UniProtKB-EC"/>
</dbReference>
<dbReference type="GO" id="GO:0003968">
    <property type="term" value="F:RNA-directed RNA polymerase activity"/>
    <property type="evidence" value="ECO:0007669"/>
    <property type="project" value="UniProtKB-KW"/>
</dbReference>
<dbReference type="GO" id="GO:0004252">
    <property type="term" value="F:serine-type endopeptidase activity"/>
    <property type="evidence" value="ECO:0007669"/>
    <property type="project" value="InterPro"/>
</dbReference>
<dbReference type="GO" id="GO:0017124">
    <property type="term" value="F:SH3 domain binding"/>
    <property type="evidence" value="ECO:0007669"/>
    <property type="project" value="UniProtKB-KW"/>
</dbReference>
<dbReference type="GO" id="GO:0005198">
    <property type="term" value="F:structural molecule activity"/>
    <property type="evidence" value="ECO:0007669"/>
    <property type="project" value="InterPro"/>
</dbReference>
<dbReference type="GO" id="GO:0008270">
    <property type="term" value="F:zinc ion binding"/>
    <property type="evidence" value="ECO:0007669"/>
    <property type="project" value="InterPro"/>
</dbReference>
<dbReference type="GO" id="GO:0075512">
    <property type="term" value="P:clathrin-dependent endocytosis of virus by host cell"/>
    <property type="evidence" value="ECO:0007669"/>
    <property type="project" value="UniProtKB-KW"/>
</dbReference>
<dbReference type="GO" id="GO:0039654">
    <property type="term" value="P:fusion of virus membrane with host endosome membrane"/>
    <property type="evidence" value="ECO:0007669"/>
    <property type="project" value="UniProtKB-KW"/>
</dbReference>
<dbReference type="GO" id="GO:0034220">
    <property type="term" value="P:monoatomic ion transmembrane transport"/>
    <property type="evidence" value="ECO:0007669"/>
    <property type="project" value="UniProtKB-KW"/>
</dbReference>
<dbReference type="GO" id="GO:0006508">
    <property type="term" value="P:proteolysis"/>
    <property type="evidence" value="ECO:0007669"/>
    <property type="project" value="UniProtKB-KW"/>
</dbReference>
<dbReference type="GO" id="GO:0039520">
    <property type="term" value="P:symbiont-mediated activation of host autophagy"/>
    <property type="evidence" value="ECO:0007669"/>
    <property type="project" value="UniProtKB-KW"/>
</dbReference>
<dbReference type="GO" id="GO:0039645">
    <property type="term" value="P:symbiont-mediated perturbation of host cell cycle G1/S transition checkpoint"/>
    <property type="evidence" value="ECO:0007669"/>
    <property type="project" value="UniProtKB-KW"/>
</dbReference>
<dbReference type="GO" id="GO:0039545">
    <property type="term" value="P:symbiont-mediated suppression of host cytoplasmic pattern recognition receptor signaling pathway via inhibition of MAVS activity"/>
    <property type="evidence" value="ECO:0007669"/>
    <property type="project" value="UniProtKB-KW"/>
</dbReference>
<dbReference type="GO" id="GO:0039563">
    <property type="term" value="P:symbiont-mediated suppression of host JAK-STAT cascade via inhibition of STAT1 activity"/>
    <property type="evidence" value="ECO:0007669"/>
    <property type="project" value="UniProtKB-KW"/>
</dbReference>
<dbReference type="GO" id="GO:0039527">
    <property type="term" value="P:symbiont-mediated suppression of host TRAF-mediated signal transduction"/>
    <property type="evidence" value="ECO:0007669"/>
    <property type="project" value="UniProtKB-KW"/>
</dbReference>
<dbReference type="GO" id="GO:0039502">
    <property type="term" value="P:symbiont-mediated suppression of host type I interferon-mediated signaling pathway"/>
    <property type="evidence" value="ECO:0007669"/>
    <property type="project" value="UniProtKB-KW"/>
</dbReference>
<dbReference type="GO" id="GO:0019087">
    <property type="term" value="P:symbiont-mediated transformation of host cell"/>
    <property type="evidence" value="ECO:0007669"/>
    <property type="project" value="InterPro"/>
</dbReference>
<dbReference type="GO" id="GO:0039694">
    <property type="term" value="P:viral RNA genome replication"/>
    <property type="evidence" value="ECO:0007669"/>
    <property type="project" value="InterPro"/>
</dbReference>
<dbReference type="GO" id="GO:0019062">
    <property type="term" value="P:virion attachment to host cell"/>
    <property type="evidence" value="ECO:0007669"/>
    <property type="project" value="UniProtKB-KW"/>
</dbReference>
<dbReference type="CDD" id="cd17931">
    <property type="entry name" value="DEXHc_viral_Ns3"/>
    <property type="match status" value="1"/>
</dbReference>
<dbReference type="CDD" id="cd20903">
    <property type="entry name" value="HCV_p7"/>
    <property type="match status" value="1"/>
</dbReference>
<dbReference type="CDD" id="cd23202">
    <property type="entry name" value="Hepacivirus_RdRp"/>
    <property type="match status" value="1"/>
</dbReference>
<dbReference type="CDD" id="cd18806">
    <property type="entry name" value="SF2_C_viral"/>
    <property type="match status" value="1"/>
</dbReference>
<dbReference type="FunFam" id="1.10.820.10:FF:000001">
    <property type="entry name" value="Genome polyprotein"/>
    <property type="match status" value="1"/>
</dbReference>
<dbReference type="FunFam" id="1.20.1280.150:FF:000001">
    <property type="entry name" value="Genome polyprotein"/>
    <property type="match status" value="1"/>
</dbReference>
<dbReference type="FunFam" id="2.20.25.210:FF:000001">
    <property type="entry name" value="Genome polyprotein"/>
    <property type="match status" value="1"/>
</dbReference>
<dbReference type="FunFam" id="2.20.25.220:FF:000001">
    <property type="entry name" value="Genome polyprotein"/>
    <property type="match status" value="1"/>
</dbReference>
<dbReference type="FunFam" id="2.40.10.10:FF:000029">
    <property type="entry name" value="Genome polyprotein"/>
    <property type="match status" value="1"/>
</dbReference>
<dbReference type="FunFam" id="2.40.10.120:FF:000003">
    <property type="entry name" value="Genome polyprotein"/>
    <property type="match status" value="1"/>
</dbReference>
<dbReference type="FunFam" id="3.30.160.890:FF:000001">
    <property type="entry name" value="Genome polyprotein"/>
    <property type="match status" value="1"/>
</dbReference>
<dbReference type="FunFam" id="3.30.70.270:FF:000015">
    <property type="entry name" value="Genome polyprotein"/>
    <property type="match status" value="1"/>
</dbReference>
<dbReference type="FunFam" id="3.40.50.300:FF:000557">
    <property type="entry name" value="Genome polyprotein"/>
    <property type="match status" value="1"/>
</dbReference>
<dbReference type="FunFam" id="3.40.50.300:FF:000717">
    <property type="entry name" value="Genome polyprotein"/>
    <property type="match status" value="1"/>
</dbReference>
<dbReference type="FunFam" id="4.10.710.10:FF:000001">
    <property type="entry name" value="Genome polyprotein"/>
    <property type="match status" value="1"/>
</dbReference>
<dbReference type="Gene3D" id="2.40.10.120">
    <property type="match status" value="1"/>
</dbReference>
<dbReference type="Gene3D" id="3.30.70.270">
    <property type="match status" value="2"/>
</dbReference>
<dbReference type="Gene3D" id="6.10.250.1610">
    <property type="match status" value="1"/>
</dbReference>
<dbReference type="Gene3D" id="6.10.250.1750">
    <property type="match status" value="1"/>
</dbReference>
<dbReference type="Gene3D" id="6.10.250.2920">
    <property type="match status" value="1"/>
</dbReference>
<dbReference type="Gene3D" id="2.20.25.210">
    <property type="entry name" value="Hepatitis C NS5A, domain 1B"/>
    <property type="match status" value="1"/>
</dbReference>
<dbReference type="Gene3D" id="4.10.710.10">
    <property type="entry name" value="Hepatitis C Virus Capsid Protein, Chain A"/>
    <property type="match status" value="1"/>
</dbReference>
<dbReference type="Gene3D" id="3.30.160.890">
    <property type="entry name" value="Hepatitis C virus envelope glycoprotein E1, chain C"/>
    <property type="match status" value="1"/>
</dbReference>
<dbReference type="Gene3D" id="2.30.30.710">
    <property type="entry name" value="Hepatitis C virus non-structural protein NS2, C-terminal domain"/>
    <property type="match status" value="1"/>
</dbReference>
<dbReference type="Gene3D" id="1.20.1280.150">
    <property type="entry name" value="Hepatitis C virus non-structural protein NS2, N-terminal domain"/>
    <property type="match status" value="1"/>
</dbReference>
<dbReference type="Gene3D" id="2.20.25.220">
    <property type="entry name" value="Hepatitis C virus NS5A, 1B domain"/>
    <property type="match status" value="1"/>
</dbReference>
<dbReference type="Gene3D" id="3.40.50.300">
    <property type="entry name" value="P-loop containing nucleotide triphosphate hydrolases"/>
    <property type="match status" value="2"/>
</dbReference>
<dbReference type="Gene3D" id="1.10.820.10">
    <property type="entry name" value="RNA Helicase Chain A , domain 3"/>
    <property type="match status" value="1"/>
</dbReference>
<dbReference type="Gene3D" id="2.40.10.10">
    <property type="entry name" value="Trypsin-like serine proteases"/>
    <property type="match status" value="1"/>
</dbReference>
<dbReference type="InterPro" id="IPR043502">
    <property type="entry name" value="DNA/RNA_pol_sf"/>
</dbReference>
<dbReference type="InterPro" id="IPR011492">
    <property type="entry name" value="Flavi_DEAD"/>
</dbReference>
<dbReference type="InterPro" id="IPR002521">
    <property type="entry name" value="HCV_Core_C"/>
</dbReference>
<dbReference type="InterPro" id="IPR044896">
    <property type="entry name" value="HCV_core_chain_A"/>
</dbReference>
<dbReference type="InterPro" id="IPR002522">
    <property type="entry name" value="HCV_core_N"/>
</dbReference>
<dbReference type="InterPro" id="IPR002519">
    <property type="entry name" value="HCV_Env"/>
</dbReference>
<dbReference type="InterPro" id="IPR002531">
    <property type="entry name" value="HCV_NS1"/>
</dbReference>
<dbReference type="InterPro" id="IPR002518">
    <property type="entry name" value="HCV_NS2"/>
</dbReference>
<dbReference type="InterPro" id="IPR042205">
    <property type="entry name" value="HCV_NS2_C"/>
</dbReference>
<dbReference type="InterPro" id="IPR042209">
    <property type="entry name" value="HCV_NS2_N"/>
</dbReference>
<dbReference type="InterPro" id="IPR000745">
    <property type="entry name" value="HCV_NS4a"/>
</dbReference>
<dbReference type="InterPro" id="IPR001490">
    <property type="entry name" value="HCV_NS4b"/>
</dbReference>
<dbReference type="InterPro" id="IPR002868">
    <property type="entry name" value="HCV_NS5a"/>
</dbReference>
<dbReference type="InterPro" id="IPR013192">
    <property type="entry name" value="HCV_NS5A_1a"/>
</dbReference>
<dbReference type="InterPro" id="IPR013193">
    <property type="entry name" value="HCV_NS5a_1B_dom"/>
</dbReference>
<dbReference type="InterPro" id="IPR038568">
    <property type="entry name" value="HCV_NS5A_1B_sf"/>
</dbReference>
<dbReference type="InterPro" id="IPR024350">
    <property type="entry name" value="HCV_NS5a_C"/>
</dbReference>
<dbReference type="InterPro" id="IPR049913">
    <property type="entry name" value="HCV_p7"/>
</dbReference>
<dbReference type="InterPro" id="IPR014001">
    <property type="entry name" value="Helicase_ATP-bd"/>
</dbReference>
<dbReference type="InterPro" id="IPR001650">
    <property type="entry name" value="Helicase_C-like"/>
</dbReference>
<dbReference type="InterPro" id="IPR004109">
    <property type="entry name" value="HepC_NS3_protease"/>
</dbReference>
<dbReference type="InterPro" id="IPR054175">
    <property type="entry name" value="NS3_helicase_C"/>
</dbReference>
<dbReference type="InterPro" id="IPR038170">
    <property type="entry name" value="NS5A_1a_sf"/>
</dbReference>
<dbReference type="InterPro" id="IPR027417">
    <property type="entry name" value="P-loop_NTPase"/>
</dbReference>
<dbReference type="InterPro" id="IPR009003">
    <property type="entry name" value="Peptidase_S1_PA"/>
</dbReference>
<dbReference type="InterPro" id="IPR043504">
    <property type="entry name" value="Peptidase_S1_PA_chymotrypsin"/>
</dbReference>
<dbReference type="InterPro" id="IPR043128">
    <property type="entry name" value="Rev_trsase/Diguanyl_cyclase"/>
</dbReference>
<dbReference type="InterPro" id="IPR007094">
    <property type="entry name" value="RNA-dir_pol_PSvirus"/>
</dbReference>
<dbReference type="InterPro" id="IPR002166">
    <property type="entry name" value="RNA_pol_HCV"/>
</dbReference>
<dbReference type="Pfam" id="PF07652">
    <property type="entry name" value="Flavi_DEAD"/>
    <property type="match status" value="1"/>
</dbReference>
<dbReference type="Pfam" id="PF01543">
    <property type="entry name" value="HCV_capsid"/>
    <property type="match status" value="1"/>
</dbReference>
<dbReference type="Pfam" id="PF01542">
    <property type="entry name" value="HCV_core"/>
    <property type="match status" value="1"/>
</dbReference>
<dbReference type="Pfam" id="PF01539">
    <property type="entry name" value="HCV_env"/>
    <property type="match status" value="1"/>
</dbReference>
<dbReference type="Pfam" id="PF01560">
    <property type="entry name" value="HCV_NS1"/>
    <property type="match status" value="1"/>
</dbReference>
<dbReference type="Pfam" id="PF01538">
    <property type="entry name" value="HCV_NS2"/>
    <property type="match status" value="1"/>
</dbReference>
<dbReference type="Pfam" id="PF01006">
    <property type="entry name" value="HCV_NS4a"/>
    <property type="match status" value="1"/>
</dbReference>
<dbReference type="Pfam" id="PF01001">
    <property type="entry name" value="HCV_NS4b"/>
    <property type="match status" value="1"/>
</dbReference>
<dbReference type="Pfam" id="PF01506">
    <property type="entry name" value="HCV_NS5a"/>
    <property type="match status" value="1"/>
</dbReference>
<dbReference type="Pfam" id="PF08300">
    <property type="entry name" value="HCV_NS5a_1a"/>
    <property type="match status" value="1"/>
</dbReference>
<dbReference type="Pfam" id="PF08301">
    <property type="entry name" value="HCV_NS5a_1b"/>
    <property type="match status" value="1"/>
</dbReference>
<dbReference type="Pfam" id="PF12941">
    <property type="entry name" value="HCV_NS5a_C"/>
    <property type="match status" value="1"/>
</dbReference>
<dbReference type="Pfam" id="PF22027">
    <property type="entry name" value="NS3_helicase_C"/>
    <property type="match status" value="1"/>
</dbReference>
<dbReference type="Pfam" id="PF02907">
    <property type="entry name" value="Peptidase_S29"/>
    <property type="match status" value="1"/>
</dbReference>
<dbReference type="Pfam" id="PF00998">
    <property type="entry name" value="RdRP_3"/>
    <property type="match status" value="1"/>
</dbReference>
<dbReference type="SMART" id="SM00487">
    <property type="entry name" value="DEXDc"/>
    <property type="match status" value="1"/>
</dbReference>
<dbReference type="SUPFAM" id="SSF56672">
    <property type="entry name" value="DNA/RNA polymerases"/>
    <property type="match status" value="1"/>
</dbReference>
<dbReference type="SUPFAM" id="SSF52540">
    <property type="entry name" value="P-loop containing nucleoside triphosphate hydrolases"/>
    <property type="match status" value="2"/>
</dbReference>
<dbReference type="SUPFAM" id="SSF50494">
    <property type="entry name" value="Trypsin-like serine proteases"/>
    <property type="match status" value="1"/>
</dbReference>
<dbReference type="PROSITE" id="PS51693">
    <property type="entry name" value="HCV_NS2_PRO"/>
    <property type="match status" value="1"/>
</dbReference>
<dbReference type="PROSITE" id="PS51192">
    <property type="entry name" value="HELICASE_ATP_BIND_1"/>
    <property type="match status" value="1"/>
</dbReference>
<dbReference type="PROSITE" id="PS51194">
    <property type="entry name" value="HELICASE_CTER"/>
    <property type="match status" value="1"/>
</dbReference>
<dbReference type="PROSITE" id="PS51822">
    <property type="entry name" value="HV_PV_NS3_PRO"/>
    <property type="match status" value="1"/>
</dbReference>
<dbReference type="PROSITE" id="PS50507">
    <property type="entry name" value="RDRP_SSRNA_POS"/>
    <property type="match status" value="1"/>
</dbReference>
<proteinExistence type="evidence at protein level"/>
<feature type="initiator methionine" description="Removed; by host" evidence="4">
    <location>
        <position position="1"/>
    </location>
</feature>
<feature type="chain" id="PRO_0000450852" description="Genome polyprotein">
    <location>
        <begin position="2"/>
        <end position="3010"/>
    </location>
</feature>
<feature type="chain" id="PRO_0000037529" description="Core protein precursor">
    <location>
        <begin position="2"/>
        <end position="191"/>
    </location>
</feature>
<feature type="chain" id="PRO_0000037530" description="Mature core protein">
    <location>
        <begin position="2"/>
        <end position="177"/>
    </location>
</feature>
<feature type="propeptide" id="PRO_0000037531" description="ER anchor for the core protein, removed in mature form by host signal peptidase" evidence="5">
    <location>
        <begin position="178"/>
        <end position="191"/>
    </location>
</feature>
<feature type="chain" id="PRO_0000037532" description="Envelope glycoprotein E1">
    <location>
        <begin position="192"/>
        <end position="383"/>
    </location>
</feature>
<feature type="chain" id="PRO_0000037533" description="Envelope glycoprotein E2">
    <location>
        <begin position="384"/>
        <end position="746"/>
    </location>
</feature>
<feature type="chain" id="PRO_0000037534" description="Viroporin p7">
    <location>
        <begin position="747"/>
        <end position="809"/>
    </location>
</feature>
<feature type="chain" id="PRO_0000037535" description="Protease NS2" evidence="16">
    <location>
        <begin position="810"/>
        <end position="1026"/>
    </location>
</feature>
<feature type="chain" id="PRO_0000037536" description="Serine protease/helicase NS3">
    <location>
        <begin position="1027"/>
        <end position="1657"/>
    </location>
</feature>
<feature type="chain" id="PRO_0000037537" description="Non-structural protein 4A">
    <location>
        <begin position="1658"/>
        <end position="1711"/>
    </location>
</feature>
<feature type="chain" id="PRO_0000037538" description="Non-structural protein 4B">
    <location>
        <begin position="1712"/>
        <end position="1972"/>
    </location>
</feature>
<feature type="chain" id="PRO_0000037539" description="Non-structural protein 5A">
    <location>
        <begin position="1973"/>
        <end position="2419"/>
    </location>
</feature>
<feature type="chain" id="PRO_0000037540" description="RNA-directed RNA polymerase">
    <location>
        <begin position="2420"/>
        <end position="3010"/>
    </location>
</feature>
<feature type="topological domain" description="Lumenal" evidence="5">
    <location>
        <begin position="190"/>
        <end position="358"/>
    </location>
</feature>
<feature type="transmembrane region" description="Helical" evidence="5">
    <location>
        <begin position="359"/>
        <end position="379"/>
    </location>
</feature>
<feature type="topological domain" description="Lumenal" evidence="5">
    <location>
        <begin position="380"/>
        <end position="725"/>
    </location>
</feature>
<feature type="transmembrane region" description="Helical" evidence="5">
    <location>
        <begin position="726"/>
        <end position="746"/>
    </location>
</feature>
<feature type="topological domain" description="Lumenal" evidence="5">
    <location>
        <begin position="747"/>
        <end position="757"/>
    </location>
</feature>
<feature type="transmembrane region" description="Helical" evidence="5">
    <location>
        <begin position="758"/>
        <end position="778"/>
    </location>
</feature>
<feature type="topological domain" description="Cytoplasmic" evidence="5">
    <location>
        <begin position="779"/>
        <end position="781"/>
    </location>
</feature>
<feature type="transmembrane region" description="Helical" evidence="5">
    <location>
        <begin position="782"/>
        <end position="803"/>
    </location>
</feature>
<feature type="topological domain" description="Lumenal" evidence="5">
    <location>
        <begin position="804"/>
        <end position="813"/>
    </location>
</feature>
<feature type="transmembrane region" description="Helical" evidence="12">
    <location>
        <begin position="814"/>
        <end position="834"/>
    </location>
</feature>
<feature type="topological domain" description="Cytoplasmic" evidence="12">
    <location>
        <begin position="835"/>
        <end position="838"/>
    </location>
</feature>
<feature type="transmembrane region" description="Helical" evidence="12">
    <location>
        <begin position="839"/>
        <end position="859"/>
    </location>
</feature>
<feature type="topological domain" description="Lumenal" evidence="12">
    <location>
        <begin position="860"/>
        <end position="881"/>
    </location>
</feature>
<feature type="transmembrane region" description="Helical" evidence="12">
    <location>
        <begin position="882"/>
        <end position="902"/>
    </location>
</feature>
<feature type="topological domain" description="Cytoplasmic" evidence="12">
    <location>
        <begin position="903"/>
        <end position="1657"/>
    </location>
</feature>
<feature type="transmembrane region" description="Helical" evidence="13">
    <location>
        <begin position="1658"/>
        <end position="1678"/>
    </location>
</feature>
<feature type="topological domain" description="Cytoplasmic" evidence="13">
    <location>
        <begin position="1679"/>
        <end position="1805"/>
    </location>
</feature>
<feature type="transmembrane region" description="Helical" evidence="13">
    <location>
        <begin position="1806"/>
        <end position="1826"/>
    </location>
</feature>
<feature type="topological domain" description="Lumenal" evidence="13">
    <location>
        <begin position="1827"/>
        <end position="1828"/>
    </location>
</feature>
<feature type="transmembrane region" description="Helical" evidence="13">
    <location>
        <begin position="1829"/>
        <end position="1849"/>
    </location>
</feature>
<feature type="topological domain" description="Cytoplasmic" evidence="13">
    <location>
        <position position="1850"/>
    </location>
</feature>
<feature type="transmembrane region" description="Helical" evidence="13">
    <location>
        <begin position="1851"/>
        <end position="1871"/>
    </location>
</feature>
<feature type="topological domain" description="Lumenal" evidence="13">
    <location>
        <begin position="1872"/>
        <end position="1881"/>
    </location>
</feature>
<feature type="transmembrane region" description="Helical" evidence="13">
    <location>
        <begin position="1882"/>
        <end position="1902"/>
    </location>
</feature>
<feature type="topological domain" description="Cytoplasmic" evidence="13">
    <location>
        <begin position="1903"/>
        <end position="1972"/>
    </location>
</feature>
<feature type="intramembrane region" evidence="5">
    <location>
        <begin position="1973"/>
        <end position="2003"/>
    </location>
</feature>
<feature type="topological domain" description="Cytoplasmic" evidence="5">
    <location>
        <begin position="2004"/>
        <end position="2989"/>
    </location>
</feature>
<feature type="transmembrane region" description="Helical" evidence="5">
    <location>
        <begin position="2990"/>
        <end position="3010"/>
    </location>
</feature>
<feature type="domain" description="Peptidase C18" evidence="16">
    <location>
        <begin position="903"/>
        <end position="1026"/>
    </location>
</feature>
<feature type="domain" description="Peptidase S29" evidence="17">
    <location>
        <begin position="1027"/>
        <end position="1208"/>
    </location>
</feature>
<feature type="domain" description="Helicase ATP-binding" evidence="15">
    <location>
        <begin position="1217"/>
        <end position="1369"/>
    </location>
</feature>
<feature type="domain" description="RdRp catalytic" evidence="14">
    <location>
        <begin position="2633"/>
        <end position="2751"/>
    </location>
</feature>
<feature type="region of interest" description="Disordered" evidence="40">
    <location>
        <begin position="2"/>
        <end position="75"/>
    </location>
</feature>
<feature type="region of interest" description="Interaction with DDX3X" evidence="9">
    <location>
        <begin position="2"/>
        <end position="59"/>
    </location>
</feature>
<feature type="region of interest" description="Interaction with EIF2AK2/PKR" evidence="3">
    <location>
        <begin position="2"/>
        <end position="58"/>
    </location>
</feature>
<feature type="region of interest" description="Interaction with STAT1" evidence="3">
    <location>
        <begin position="2"/>
        <end position="23"/>
    </location>
</feature>
<feature type="region of interest" description="Important for endoplasmic reticulum and mitochondrial localization" evidence="3">
    <location>
        <begin position="112"/>
        <end position="152"/>
    </location>
</feature>
<feature type="region of interest" description="Interaction with APOA2" evidence="6">
    <location>
        <begin position="122"/>
        <end position="173"/>
    </location>
</feature>
<feature type="region of interest" description="Important for lipid droplets localization" evidence="5">
    <location>
        <begin position="164"/>
        <end position="167"/>
    </location>
</feature>
<feature type="region of interest" description="Important for fusion" evidence="5">
    <location>
        <begin position="265"/>
        <end position="296"/>
    </location>
</feature>
<feature type="region of interest" description="HVR1" evidence="5">
    <location>
        <begin position="385"/>
        <end position="411"/>
    </location>
</feature>
<feature type="region of interest" description="HVR2" evidence="5">
    <location>
        <begin position="474"/>
        <end position="482"/>
    </location>
</feature>
<feature type="region of interest" description="CD81-binding 1" evidence="24">
    <location>
        <begin position="480"/>
        <end position="494"/>
    </location>
</feature>
<feature type="region of interest" description="CD81-binding 2" evidence="24">
    <location>
        <begin position="544"/>
        <end position="552"/>
    </location>
</feature>
<feature type="region of interest" description="EIF2AK2/eIF2-alpha phosphorylation homology domain (PePHD)">
    <location>
        <begin position="660"/>
        <end position="671"/>
    </location>
</feature>
<feature type="region of interest" description="Protease NS2-3" evidence="22">
    <location>
        <begin position="904"/>
        <end position="1206"/>
    </location>
</feature>
<feature type="region of interest" description="Interaction with host SCPS1" evidence="11">
    <location>
        <begin position="929"/>
        <end position="949"/>
    </location>
</feature>
<feature type="region of interest" description="RNA-binding" evidence="34">
    <location>
        <begin position="1486"/>
        <end position="1497"/>
    </location>
</feature>
<feature type="region of interest" description="NS3-binding" evidence="5">
    <location>
        <begin position="1679"/>
        <end position="1690"/>
    </location>
</feature>
<feature type="region of interest" description="Glycine zipper" evidence="11">
    <location>
        <begin position="1833"/>
        <end position="1861"/>
    </location>
</feature>
<feature type="region of interest" description="Membrane-binding" evidence="5">
    <location>
        <begin position="1978"/>
        <end position="1998"/>
    </location>
</feature>
<feature type="region of interest" description="RNA-binding" evidence="5">
    <location>
        <begin position="2005"/>
        <end position="2221"/>
    </location>
</feature>
<feature type="region of interest" description="Transcriptional activation" evidence="13">
    <location>
        <begin position="2120"/>
        <end position="2332"/>
    </location>
</feature>
<feature type="region of interest" description="FKBP8-binding" evidence="3">
    <location>
        <begin position="2120"/>
        <end position="2208"/>
    </location>
</feature>
<feature type="region of interest" description="Interaction with non-structural protein 4A" evidence="3">
    <location>
        <begin position="2135"/>
        <end position="2139"/>
    </location>
</feature>
<feature type="region of interest" description="Interaction with host SKP2" evidence="5">
    <location>
        <begin position="2189"/>
        <end position="2441"/>
    </location>
</feature>
<feature type="region of interest" description="EIF2AK2/PKR-binding" evidence="35">
    <location>
        <begin position="2210"/>
        <end position="2275"/>
    </location>
</feature>
<feature type="region of interest" description="ISDR" evidence="35">
    <location>
        <begin position="2210"/>
        <end position="2249"/>
    </location>
</feature>
<feature type="region of interest" description="NS4B-binding" evidence="13">
    <location>
        <begin position="2249"/>
        <end position="2306"/>
    </location>
</feature>
<feature type="region of interest" description="Interaction with host IFI27" evidence="5">
    <location>
        <begin position="2332"/>
        <end position="2441"/>
    </location>
</feature>
<feature type="region of interest" description="Disordered" evidence="18">
    <location>
        <begin position="2351"/>
        <end position="2407"/>
    </location>
</feature>
<feature type="region of interest" description="V3">
    <location>
        <begin position="2354"/>
        <end position="2377"/>
    </location>
</feature>
<feature type="short sequence motif" description="Nuclear localization signal" evidence="11">
    <location>
        <begin position="5"/>
        <end position="13"/>
    </location>
</feature>
<feature type="short sequence motif" description="Nuclear localization signal" evidence="11">
    <location>
        <begin position="38"/>
        <end position="43"/>
    </location>
</feature>
<feature type="short sequence motif" description="Nuclear localization signal" evidence="11">
    <location>
        <begin position="58"/>
        <end position="64"/>
    </location>
</feature>
<feature type="short sequence motif" description="Nuclear localization signal" evidence="11">
    <location>
        <begin position="66"/>
        <end position="71"/>
    </location>
</feature>
<feature type="short sequence motif" description="DECH box" evidence="11">
    <location>
        <begin position="1316"/>
        <end position="1319"/>
    </location>
</feature>
<feature type="short sequence motif" description="SH3-binding" evidence="13">
    <location>
        <begin position="2322"/>
        <end position="2325"/>
    </location>
</feature>
<feature type="short sequence motif" description="Nuclear localization signal" evidence="3">
    <location>
        <begin position="2326"/>
        <end position="2334"/>
    </location>
</feature>
<feature type="compositionally biased region" description="Basic residues" evidence="18">
    <location>
        <begin position="7"/>
        <end position="16"/>
    </location>
</feature>
<feature type="compositionally biased region" description="Low complexity" evidence="18">
    <location>
        <begin position="32"/>
        <end position="47"/>
    </location>
</feature>
<feature type="compositionally biased region" description="Basic residues" evidence="18">
    <location>
        <begin position="58"/>
        <end position="68"/>
    </location>
</feature>
<feature type="compositionally biased region" description="Polar residues" evidence="18">
    <location>
        <begin position="2351"/>
        <end position="2365"/>
    </location>
</feature>
<feature type="active site" description="For protease NS2 activity; shared with dimeric partner" evidence="16">
    <location>
        <position position="952"/>
    </location>
</feature>
<feature type="active site" description="For protease NS2 activity; shared with dimeric partner" evidence="16">
    <location>
        <position position="972"/>
    </location>
</feature>
<feature type="active site" description="For protease NS2 activity; shared with dimeric partner" evidence="16">
    <location>
        <position position="993"/>
    </location>
</feature>
<feature type="active site" description="Charge relay system; for serine protease NS3 activity" evidence="17 29">
    <location>
        <position position="1083"/>
    </location>
</feature>
<feature type="active site" description="Charge relay system; for serine protease NS3 activity" evidence="17 29">
    <location>
        <position position="1107"/>
    </location>
</feature>
<feature type="active site" description="Charge relay system; for serine protease NS3 activity" evidence="17 29 33">
    <location>
        <position position="1165"/>
    </location>
</feature>
<feature type="binding site" evidence="17 20 29 33">
    <location>
        <position position="1123"/>
    </location>
    <ligand>
        <name>Zn(2+)</name>
        <dbReference type="ChEBI" id="CHEBI:29105"/>
        <label>1</label>
        <note>structural; for NS3 protease activity and NS2/3 auto-cleavage activity</note>
    </ligand>
</feature>
<feature type="binding site" evidence="17 20 29 33">
    <location>
        <position position="1125"/>
    </location>
    <ligand>
        <name>Zn(2+)</name>
        <dbReference type="ChEBI" id="CHEBI:29105"/>
        <label>1</label>
        <note>structural; for NS3 protease activity and NS2/3 auto-cleavage activity</note>
    </ligand>
</feature>
<feature type="binding site" evidence="17 20 29">
    <location>
        <position position="1171"/>
    </location>
    <ligand>
        <name>Zn(2+)</name>
        <dbReference type="ChEBI" id="CHEBI:29105"/>
        <label>1</label>
        <note>structural; for NS3 protease activity and NS2/3 auto-cleavage activity</note>
    </ligand>
</feature>
<feature type="binding site" evidence="17 20 29">
    <location>
        <position position="1175"/>
    </location>
    <ligand>
        <name>Zn(2+)</name>
        <dbReference type="ChEBI" id="CHEBI:29105"/>
        <label>1</label>
        <note>structural; for NS3 protease activity and NS2/3 auto-cleavage activity</note>
    </ligand>
</feature>
<feature type="binding site" evidence="15">
    <location>
        <begin position="1230"/>
        <end position="1237"/>
    </location>
    <ligand>
        <name>ATP</name>
        <dbReference type="ChEBI" id="CHEBI:30616"/>
    </ligand>
</feature>
<feature type="binding site" evidence="12">
    <location>
        <position position="1237"/>
    </location>
    <ligand>
        <name>Mg(2+)</name>
        <dbReference type="ChEBI" id="CHEBI:18420"/>
        <label>1</label>
        <note>catalytic; for NS3 helicase activity</note>
    </ligand>
</feature>
<feature type="binding site" evidence="12">
    <location>
        <position position="1317"/>
    </location>
    <ligand>
        <name>Mg(2+)</name>
        <dbReference type="ChEBI" id="CHEBI:18420"/>
        <label>1</label>
        <note>catalytic; for NS3 helicase activity</note>
    </ligand>
</feature>
<feature type="binding site" evidence="12">
    <location>
        <position position="2011"/>
    </location>
    <ligand>
        <name>Zn(2+)</name>
        <dbReference type="ChEBI" id="CHEBI:29105"/>
        <label>2</label>
        <note>structural</note>
    </ligand>
</feature>
<feature type="binding site" evidence="12">
    <location>
        <position position="2029"/>
    </location>
    <ligand>
        <name>Zn(2+)</name>
        <dbReference type="ChEBI" id="CHEBI:29105"/>
        <label>2</label>
        <note>structural</note>
    </ligand>
</feature>
<feature type="binding site" evidence="12">
    <location>
        <position position="2031"/>
    </location>
    <ligand>
        <name>Zn(2+)</name>
        <dbReference type="ChEBI" id="CHEBI:29105"/>
        <label>2</label>
        <note>structural</note>
    </ligand>
</feature>
<feature type="binding site" evidence="12">
    <location>
        <position position="2052"/>
    </location>
    <ligand>
        <name>Zn(2+)</name>
        <dbReference type="ChEBI" id="CHEBI:29105"/>
        <label>2</label>
        <note>structural</note>
    </ligand>
</feature>
<feature type="binding site" evidence="37 39">
    <location>
        <position position="2639"/>
    </location>
    <ligand>
        <name>Mg(2+)</name>
        <dbReference type="ChEBI" id="CHEBI:18420"/>
        <label>2</label>
        <note>catalytic; for RNA-directed RNA polymerase activity</note>
    </ligand>
</feature>
<feature type="binding site" evidence="37 39">
    <location>
        <position position="2737"/>
    </location>
    <ligand>
        <name>Mg(2+)</name>
        <dbReference type="ChEBI" id="CHEBI:18420"/>
        <label>2</label>
        <note>catalytic; for RNA-directed RNA polymerase activity</note>
    </ligand>
</feature>
<feature type="binding site" evidence="37 39">
    <location>
        <position position="2738"/>
    </location>
    <ligand>
        <name>Mg(2+)</name>
        <dbReference type="ChEBI" id="CHEBI:18420"/>
        <label>2</label>
        <note>catalytic; for RNA-directed RNA polymerase activity</note>
    </ligand>
</feature>
<feature type="site" description="Cleavage; by host signal peptide peptidase" evidence="3">
    <location>
        <begin position="177"/>
        <end position="178"/>
    </location>
</feature>
<feature type="site" description="Cleavage; by host signal peptidase" evidence="3">
    <location>
        <begin position="191"/>
        <end position="192"/>
    </location>
</feature>
<feature type="site" description="Cleavage; by host signal peptidase" evidence="3">
    <location>
        <begin position="383"/>
        <end position="384"/>
    </location>
</feature>
<feature type="site" description="Cleavage; by host signal peptidase" evidence="1">
    <location>
        <begin position="746"/>
        <end position="747"/>
    </location>
</feature>
<feature type="site" description="Cleavage; by host signal peptidase" evidence="1">
    <location>
        <begin position="809"/>
        <end position="810"/>
    </location>
</feature>
<feature type="site" description="Cleavage; by protease NS2" evidence="16">
    <location>
        <begin position="1026"/>
        <end position="1027"/>
    </location>
</feature>
<feature type="site" description="Cleavage; by serine protease/helicase NS3" evidence="5">
    <location>
        <begin position="1657"/>
        <end position="1658"/>
    </location>
</feature>
<feature type="site" description="Cleavage; by serine protease/helicase NS3" evidence="5">
    <location>
        <begin position="1711"/>
        <end position="1712"/>
    </location>
</feature>
<feature type="site" description="Cleavage; by serine protease/helicase NS3" evidence="5">
    <location>
        <begin position="1972"/>
        <end position="1973"/>
    </location>
</feature>
<feature type="site" description="Cleavage; by serine protease/helicase NS3" evidence="5">
    <location>
        <begin position="2419"/>
        <end position="2420"/>
    </location>
</feature>
<feature type="modified residue" description="N-acetylserine; by host" evidence="10">
    <location>
        <position position="2"/>
    </location>
</feature>
<feature type="modified residue" description="Phosphoserine; by host" evidence="7">
    <location>
        <position position="53"/>
    </location>
</feature>
<feature type="modified residue" description="Phosphoserine; by host" evidence="7">
    <location>
        <position position="99"/>
    </location>
</feature>
<feature type="modified residue" description="Phosphoserine; by host PKA" evidence="7">
    <location>
        <position position="116"/>
    </location>
</feature>
<feature type="modified residue" description="Phosphoserine; by host; in p56" evidence="21">
    <location>
        <position position="2194"/>
    </location>
</feature>
<feature type="modified residue" description="Phosphoserine; by host; in p58" evidence="12">
    <location>
        <position position="2197"/>
    </location>
</feature>
<feature type="modified residue" description="Phosphoserine; by host; in p58" evidence="12">
    <location>
        <position position="2201"/>
    </location>
</feature>
<feature type="modified residue" description="Phosphoserine; by host; in p58" evidence="12">
    <location>
        <position position="2204"/>
    </location>
</feature>
<feature type="modified residue" description="Phosphoserine; by host; in p58" evidence="11">
    <location>
        <position position="2207"/>
    </location>
</feature>
<feature type="modified residue" description="Phosphoserine; by host; in p58" evidence="11">
    <location>
        <position position="2210"/>
    </location>
</feature>
<feature type="modified residue" description="Phosphoserine; by host" evidence="3">
    <location>
        <position position="2448"/>
    </location>
</feature>
<feature type="modified residue" description="Phosphoserine; by host" evidence="3">
    <location>
        <position position="2461"/>
    </location>
</feature>
<feature type="lipid moiety-binding region" description="S-palmitoyl cysteine; by host" evidence="5">
    <location>
        <position position="922"/>
    </location>
</feature>
<feature type="lipid moiety-binding region" description="S-palmitoyl cysteine; by host" evidence="5">
    <location>
        <position position="1968"/>
    </location>
</feature>
<feature type="lipid moiety-binding region" description="S-palmitoyl cysteine; by host" evidence="5">
    <location>
        <position position="1972"/>
    </location>
</feature>
<feature type="glycosylation site" description="N-linked (GlcNAc...) asparagine; by host" evidence="30">
    <location>
        <position position="196"/>
    </location>
</feature>
<feature type="glycosylation site" description="N-linked (GlcNAc...) asparagine; by host" evidence="5">
    <location>
        <position position="209"/>
    </location>
</feature>
<feature type="glycosylation site" description="N-linked (GlcNAc...) asparagine; by host" evidence="5">
    <location>
        <position position="234"/>
    </location>
</feature>
<feature type="glycosylation site" description="N-linked (GlcNAc...) asparagine; by host" evidence="5">
    <location>
        <position position="250"/>
    </location>
</feature>
<feature type="glycosylation site" description="N-linked (GlcNAc...) asparagine; by host" evidence="13">
    <location>
        <position position="305"/>
    </location>
</feature>
<feature type="glycosylation site" description="N-linked (GlcNAc...) asparagine; by host" evidence="13">
    <location>
        <position position="417"/>
    </location>
</feature>
<feature type="glycosylation site" description="N-linked (GlcNAc...) (high mannose) asparagine; by host" evidence="5">
    <location>
        <position position="423"/>
    </location>
</feature>
<feature type="glycosylation site" description="N-linked (GlcNAc...) (high mannose) asparagine; by host" evidence="5">
    <location>
        <position position="430"/>
    </location>
</feature>
<feature type="glycosylation site" description="N-linked (GlcNAc...) (high mannose) asparagine; by host" evidence="5">
    <location>
        <position position="448"/>
    </location>
</feature>
<feature type="glycosylation site" description="N-linked (GlcNAc...) (high mannose) asparagine; by host" evidence="5">
    <location>
        <position position="532"/>
    </location>
</feature>
<feature type="glycosylation site" description="N-linked (GlcNAc...) (high mannose) asparagine; by host" evidence="5">
    <location>
        <position position="540"/>
    </location>
</feature>
<feature type="glycosylation site" description="N-linked (GlcNAc...) (high mannose) asparagine; by host" evidence="5">
    <location>
        <position position="556"/>
    </location>
</feature>
<feature type="glycosylation site" description="N-linked (GlcNAc...) (high mannose) asparagine; by host" evidence="5">
    <location>
        <position position="576"/>
    </location>
</feature>
<feature type="glycosylation site" description="N-linked (GlcNAc...) (high mannose) asparagine; by host" evidence="5">
    <location>
        <position position="623"/>
    </location>
</feature>
<feature type="glycosylation site" description="N-linked (GlcNAc...) (high mannose) asparagine; by host" evidence="5">
    <location>
        <position position="645"/>
    </location>
</feature>
<feature type="disulfide bond" evidence="5">
    <location>
        <begin position="429"/>
        <end position="552"/>
    </location>
</feature>
<feature type="disulfide bond" evidence="5">
    <location>
        <begin position="452"/>
        <end position="459"/>
    </location>
</feature>
<feature type="disulfide bond" evidence="5">
    <location>
        <begin position="486"/>
        <end position="494"/>
    </location>
</feature>
<feature type="disulfide bond" evidence="5">
    <location>
        <begin position="503"/>
        <end position="508"/>
    </location>
</feature>
<feature type="disulfide bond" evidence="5">
    <location>
        <begin position="564"/>
        <end position="569"/>
    </location>
</feature>
<feature type="disulfide bond" evidence="5">
    <location>
        <begin position="581"/>
        <end position="585"/>
    </location>
</feature>
<feature type="disulfide bond" evidence="5">
    <location>
        <begin position="597"/>
        <end position="620"/>
    </location>
</feature>
<feature type="disulfide bond" evidence="5">
    <location>
        <begin position="607"/>
        <end position="644"/>
    </location>
</feature>
<feature type="disulfide bond" evidence="5">
    <location>
        <begin position="652"/>
        <end position="677"/>
    </location>
</feature>
<feature type="cross-link" description="Glycyl lysine isopeptide (Lys-Gly) (interchain with G-Cter in ubiquitin)" evidence="5">
    <location>
        <position position="2350"/>
    </location>
</feature>
<feature type="mutagenesis site" description="Loss of phosphorylation." evidence="21">
    <original>S</original>
    <variation>A</variation>
    <location>
        <position position="2194"/>
    </location>
</feature>
<feature type="mutagenesis site" description="Complete loss of binding to GRB2." evidence="19">
    <original>P</original>
    <variation>A</variation>
    <location>
        <position position="2322"/>
    </location>
</feature>
<feature type="mutagenesis site" description="Complete loss of binding to GRB2." evidence="19">
    <original>P</original>
    <variation>A</variation>
    <location>
        <position position="2323"/>
    </location>
</feature>
<feature type="mutagenesis site" description="Complete loss of binding to GRB2." evidence="19">
    <original>P</original>
    <variation>A</variation>
    <location>
        <position position="2326"/>
    </location>
</feature>
<feature type="mutagenesis site" description="Complete loss of RdRp activity." evidence="32">
    <original>D</original>
    <variation>C</variation>
    <variation>G</variation>
    <variation>N</variation>
    <location>
        <position position="2639"/>
    </location>
</feature>
<feature type="mutagenesis site" description="Complete loss of RdRp activity." evidence="32">
    <original>D</original>
    <variation>G</variation>
    <variation>N</variation>
    <location>
        <position position="2644"/>
    </location>
</feature>
<feature type="mutagenesis site" description="Complete loss of RdRp activity." evidence="32">
    <original>G</original>
    <variation>D</variation>
    <variation>L</variation>
    <variation>R</variation>
    <location>
        <position position="2702"/>
    </location>
</feature>
<feature type="mutagenesis site" description="Almost complete loss of RdRp activity." evidence="32">
    <original>T</original>
    <variation>V</variation>
    <location>
        <position position="2705"/>
    </location>
</feature>
<feature type="mutagenesis site" description="Almost complete loss of RdRp activity." evidence="32">
    <original>T</original>
    <variation>C</variation>
    <location>
        <position position="2706"/>
    </location>
</feature>
<feature type="mutagenesis site" description="Complete loss of RdRp activity." evidence="32">
    <original>T</original>
    <variation>K</variation>
    <location>
        <position position="2706"/>
    </location>
</feature>
<feature type="mutagenesis site" description="Complete loss of RdRp activity." evidence="32">
    <original>N</original>
    <variation>K</variation>
    <location>
        <position position="2710"/>
    </location>
</feature>
<feature type="mutagenesis site" description="Almost complete loss of RdRp activity." evidence="32">
    <original>G</original>
    <variation>A</variation>
    <variation>C</variation>
    <location>
        <position position="2736"/>
    </location>
</feature>
<feature type="mutagenesis site" description="Complete loss of RdRp activity." evidence="32">
    <original>D</original>
    <variation>E</variation>
    <variation>H</variation>
    <variation>N</variation>
    <location>
        <position position="2737"/>
    </location>
</feature>
<feature type="mutagenesis site" description="Complete loss of RdRp activity." evidence="32">
    <original>D</original>
    <variation>H</variation>
    <location>
        <position position="2738"/>
    </location>
</feature>
<feature type="strand" evidence="66">
    <location>
        <begin position="413"/>
        <end position="416"/>
    </location>
</feature>
<feature type="strand" evidence="66">
    <location>
        <begin position="419"/>
        <end position="422"/>
    </location>
</feature>
<feature type="strand" evidence="65">
    <location>
        <begin position="1017"/>
        <end position="1023"/>
    </location>
</feature>
<feature type="strand" evidence="65">
    <location>
        <begin position="1031"/>
        <end position="1035"/>
    </location>
</feature>
<feature type="helix" evidence="65">
    <location>
        <begin position="1039"/>
        <end position="1048"/>
    </location>
</feature>
<feature type="strand" evidence="65">
    <location>
        <begin position="1057"/>
        <end position="1063"/>
    </location>
</feature>
<feature type="strand" evidence="65">
    <location>
        <begin position="1068"/>
        <end position="1074"/>
    </location>
</feature>
<feature type="strand" evidence="65">
    <location>
        <begin position="1077"/>
        <end position="1080"/>
    </location>
</feature>
<feature type="helix" evidence="65">
    <location>
        <begin position="1082"/>
        <end position="1085"/>
    </location>
</feature>
<feature type="strand" evidence="59">
    <location>
        <begin position="1090"/>
        <end position="1092"/>
    </location>
</feature>
<feature type="strand" evidence="59">
    <location>
        <begin position="1095"/>
        <end position="1097"/>
    </location>
</feature>
<feature type="strand" evidence="65">
    <location>
        <begin position="1100"/>
        <end position="1103"/>
    </location>
</feature>
<feature type="turn" evidence="65">
    <location>
        <begin position="1104"/>
        <end position="1107"/>
    </location>
</feature>
<feature type="strand" evidence="65">
    <location>
        <begin position="1108"/>
        <end position="1112"/>
    </location>
</feature>
<feature type="strand" evidence="65">
    <location>
        <begin position="1128"/>
        <end position="1133"/>
    </location>
</feature>
<feature type="strand" evidence="54">
    <location>
        <begin position="1135"/>
        <end position="1137"/>
    </location>
</feature>
<feature type="strand" evidence="65">
    <location>
        <begin position="1139"/>
        <end position="1144"/>
    </location>
</feature>
<feature type="strand" evidence="65">
    <location>
        <begin position="1146"/>
        <end position="1157"/>
    </location>
</feature>
<feature type="helix" evidence="65">
    <location>
        <begin position="1158"/>
        <end position="1161"/>
    </location>
</feature>
<feature type="strand" evidence="65">
    <location>
        <begin position="1168"/>
        <end position="1170"/>
    </location>
</feature>
<feature type="turn" evidence="59">
    <location>
        <begin position="1172"/>
        <end position="1174"/>
    </location>
</feature>
<feature type="strand" evidence="65">
    <location>
        <begin position="1176"/>
        <end position="1186"/>
    </location>
</feature>
<feature type="strand" evidence="65">
    <location>
        <begin position="1189"/>
        <end position="1197"/>
    </location>
</feature>
<feature type="helix" evidence="65">
    <location>
        <begin position="1198"/>
        <end position="1206"/>
    </location>
</feature>
<feature type="strand" evidence="69">
    <location>
        <begin position="1224"/>
        <end position="1229"/>
    </location>
</feature>
<feature type="strand" evidence="56">
    <location>
        <begin position="1232"/>
        <end position="1235"/>
    </location>
</feature>
<feature type="turn" evidence="69">
    <location>
        <begin position="1236"/>
        <end position="1238"/>
    </location>
</feature>
<feature type="helix" evidence="69">
    <location>
        <begin position="1239"/>
        <end position="1246"/>
    </location>
</feature>
<feature type="strand" evidence="69">
    <location>
        <begin position="1251"/>
        <end position="1256"/>
    </location>
</feature>
<feature type="helix" evidence="69">
    <location>
        <begin position="1258"/>
        <end position="1272"/>
    </location>
</feature>
<feature type="strand" evidence="69">
    <location>
        <begin position="1277"/>
        <end position="1279"/>
    </location>
</feature>
<feature type="strand" evidence="69">
    <location>
        <begin position="1290"/>
        <end position="1295"/>
    </location>
</feature>
<feature type="helix" evidence="69">
    <location>
        <begin position="1296"/>
        <end position="1301"/>
    </location>
</feature>
<feature type="strand" evidence="69">
    <location>
        <begin position="1307"/>
        <end position="1309"/>
    </location>
</feature>
<feature type="strand" evidence="69">
    <location>
        <begin position="1311"/>
        <end position="1315"/>
    </location>
</feature>
<feature type="turn" evidence="69">
    <location>
        <begin position="1316"/>
        <end position="1319"/>
    </location>
</feature>
<feature type="helix" evidence="69">
    <location>
        <begin position="1323"/>
        <end position="1335"/>
    </location>
</feature>
<feature type="turn" evidence="69">
    <location>
        <begin position="1336"/>
        <end position="1340"/>
    </location>
</feature>
<feature type="strand" evidence="69">
    <location>
        <begin position="1342"/>
        <end position="1350"/>
    </location>
</feature>
<feature type="strand" evidence="69">
    <location>
        <begin position="1362"/>
        <end position="1366"/>
    </location>
</feature>
<feature type="strand" evidence="69">
    <location>
        <begin position="1371"/>
        <end position="1375"/>
    </location>
</feature>
<feature type="strand" evidence="69">
    <location>
        <begin position="1378"/>
        <end position="1380"/>
    </location>
</feature>
<feature type="helix" evidence="69">
    <location>
        <begin position="1382"/>
        <end position="1384"/>
    </location>
</feature>
<feature type="strand" evidence="69">
    <location>
        <begin position="1386"/>
        <end position="1393"/>
    </location>
</feature>
<feature type="helix" evidence="69">
    <location>
        <begin position="1397"/>
        <end position="1409"/>
    </location>
</feature>
<feature type="strand" evidence="69">
    <location>
        <begin position="1414"/>
        <end position="1417"/>
    </location>
</feature>
<feature type="strand" evidence="70">
    <location>
        <begin position="1419"/>
        <end position="1421"/>
    </location>
</feature>
<feature type="helix" evidence="69">
    <location>
        <begin position="1423"/>
        <end position="1425"/>
    </location>
</feature>
<feature type="strand" evidence="69">
    <location>
        <begin position="1428"/>
        <end position="1430"/>
    </location>
</feature>
<feature type="strand" evidence="69">
    <location>
        <begin position="1432"/>
        <end position="1436"/>
    </location>
</feature>
<feature type="helix" evidence="69">
    <location>
        <begin position="1438"/>
        <end position="1441"/>
    </location>
</feature>
<feature type="turn" evidence="70">
    <location>
        <begin position="1442"/>
        <end position="1444"/>
    </location>
</feature>
<feature type="strand" evidence="69">
    <location>
        <begin position="1448"/>
        <end position="1453"/>
    </location>
</feature>
<feature type="strand" evidence="69">
    <location>
        <begin position="1456"/>
        <end position="1463"/>
    </location>
</feature>
<feature type="strand" evidence="69">
    <location>
        <begin position="1467"/>
        <end position="1469"/>
    </location>
</feature>
<feature type="strand" evidence="69">
    <location>
        <begin position="1471"/>
        <end position="1478"/>
    </location>
</feature>
<feature type="helix" evidence="69">
    <location>
        <begin position="1481"/>
        <end position="1488"/>
    </location>
</feature>
<feature type="strand" evidence="69">
    <location>
        <begin position="1493"/>
        <end position="1495"/>
    </location>
</feature>
<feature type="strand" evidence="69">
    <location>
        <begin position="1497"/>
        <end position="1503"/>
    </location>
</feature>
<feature type="strand" evidence="65">
    <location>
        <begin position="1509"/>
        <end position="1511"/>
    </location>
</feature>
<feature type="helix" evidence="69">
    <location>
        <begin position="1514"/>
        <end position="1526"/>
    </location>
</feature>
<feature type="helix" evidence="69">
    <location>
        <begin position="1532"/>
        <end position="1544"/>
    </location>
</feature>
<feature type="helix" evidence="69">
    <location>
        <begin position="1555"/>
        <end position="1563"/>
    </location>
</feature>
<feature type="helix" evidence="69">
    <location>
        <begin position="1570"/>
        <end position="1579"/>
    </location>
</feature>
<feature type="helix" evidence="69">
    <location>
        <begin position="1584"/>
        <end position="1596"/>
    </location>
</feature>
<feature type="helix" evidence="69">
    <location>
        <begin position="1606"/>
        <end position="1611"/>
    </location>
</feature>
<feature type="turn" evidence="69">
    <location>
        <begin position="1612"/>
        <end position="1614"/>
    </location>
</feature>
<feature type="helix" evidence="69">
    <location>
        <begin position="1615"/>
        <end position="1617"/>
    </location>
</feature>
<feature type="strand" evidence="69">
    <location>
        <begin position="1625"/>
        <end position="1629"/>
    </location>
</feature>
<feature type="strand" evidence="70">
    <location>
        <begin position="1635"/>
        <end position="1637"/>
    </location>
</feature>
<feature type="helix" evidence="69">
    <location>
        <begin position="1640"/>
        <end position="1650"/>
    </location>
</feature>
<feature type="turn" evidence="69">
    <location>
        <begin position="1653"/>
        <end position="1655"/>
    </location>
</feature>
<feature type="strand" evidence="59">
    <location>
        <begin position="1680"/>
        <end position="1688"/>
    </location>
</feature>
<feature type="strand" evidence="56">
    <location>
        <begin position="1690"/>
        <end position="1693"/>
    </location>
</feature>
<feature type="strand" evidence="60">
    <location>
        <begin position="2421"/>
        <end position="2425"/>
    </location>
</feature>
<feature type="helix" evidence="60">
    <location>
        <begin position="2446"/>
        <end position="2449"/>
    </location>
</feature>
<feature type="helix" evidence="60">
    <location>
        <begin position="2453"/>
        <end position="2455"/>
    </location>
</feature>
<feature type="strand" evidence="60">
    <location>
        <begin position="2456"/>
        <end position="2458"/>
    </location>
</feature>
<feature type="helix" evidence="60">
    <location>
        <begin position="2461"/>
        <end position="2463"/>
    </location>
</feature>
<feature type="helix" evidence="60">
    <location>
        <begin position="2464"/>
        <end position="2471"/>
    </location>
</feature>
<feature type="helix" evidence="60">
    <location>
        <begin position="2481"/>
        <end position="2494"/>
    </location>
</feature>
<feature type="helix" evidence="60">
    <location>
        <begin position="2504"/>
        <end position="2509"/>
    </location>
</feature>
<feature type="turn" evidence="62">
    <location>
        <begin position="2519"/>
        <end position="2521"/>
    </location>
</feature>
<feature type="helix" evidence="60">
    <location>
        <begin position="2524"/>
        <end position="2528"/>
    </location>
</feature>
<feature type="helix" evidence="60">
    <location>
        <begin position="2532"/>
        <end position="2547"/>
    </location>
</feature>
<feature type="strand" evidence="60">
    <location>
        <begin position="2549"/>
        <end position="2551"/>
    </location>
</feature>
<feature type="strand" evidence="60">
    <location>
        <begin position="2555"/>
        <end position="2559"/>
    </location>
</feature>
<feature type="strand" evidence="60">
    <location>
        <begin position="2563"/>
        <end position="2565"/>
    </location>
</feature>
<feature type="turn" evidence="57">
    <location>
        <begin position="2568"/>
        <end position="2571"/>
    </location>
</feature>
<feature type="strand" evidence="60">
    <location>
        <begin position="2578"/>
        <end position="2581"/>
    </location>
</feature>
<feature type="helix" evidence="60">
    <location>
        <begin position="2584"/>
        <end position="2606"/>
    </location>
</feature>
<feature type="helix" evidence="60">
    <location>
        <begin position="2607"/>
        <end position="2609"/>
    </location>
</feature>
<feature type="helix" evidence="60">
    <location>
        <begin position="2611"/>
        <end position="2613"/>
    </location>
</feature>
<feature type="helix" evidence="60">
    <location>
        <begin position="2616"/>
        <end position="2629"/>
    </location>
</feature>
<feature type="strand" evidence="60">
    <location>
        <begin position="2630"/>
        <end position="2638"/>
    </location>
</feature>
<feature type="helix" evidence="60">
    <location>
        <begin position="2643"/>
        <end position="2646"/>
    </location>
</feature>
<feature type="helix" evidence="60">
    <location>
        <begin position="2649"/>
        <end position="2659"/>
    </location>
</feature>
<feature type="helix" evidence="60">
    <location>
        <begin position="2666"/>
        <end position="2678"/>
    </location>
</feature>
<feature type="turn" evidence="58">
    <location>
        <begin position="2679"/>
        <end position="2681"/>
    </location>
</feature>
<feature type="strand" evidence="60">
    <location>
        <begin position="2683"/>
        <end position="2686"/>
    </location>
</feature>
<feature type="strand" evidence="55">
    <location>
        <begin position="2688"/>
        <end position="2690"/>
    </location>
</feature>
<feature type="strand" evidence="60">
    <location>
        <begin position="2692"/>
        <end position="2696"/>
    </location>
</feature>
<feature type="strand" evidence="61">
    <location>
        <begin position="2701"/>
        <end position="2703"/>
    </location>
</feature>
<feature type="helix" evidence="60">
    <location>
        <begin position="2706"/>
        <end position="2724"/>
    </location>
</feature>
<feature type="strand" evidence="60">
    <location>
        <begin position="2728"/>
        <end position="2735"/>
    </location>
</feature>
<feature type="strand" evidence="60">
    <location>
        <begin position="2738"/>
        <end position="2744"/>
    </location>
</feature>
<feature type="helix" evidence="60">
    <location>
        <begin position="2748"/>
        <end position="2764"/>
    </location>
</feature>
<feature type="strand" evidence="60">
    <location>
        <begin position="2769"/>
        <end position="2771"/>
    </location>
</feature>
<feature type="strand" evidence="60">
    <location>
        <begin position="2776"/>
        <end position="2778"/>
    </location>
</feature>
<feature type="helix" evidence="60">
    <location>
        <begin position="2779"/>
        <end position="2781"/>
    </location>
</feature>
<feature type="strand" evidence="60">
    <location>
        <begin position="2787"/>
        <end position="2793"/>
    </location>
</feature>
<feature type="strand" evidence="64">
    <location>
        <begin position="2795"/>
        <end position="2797"/>
    </location>
</feature>
<feature type="strand" evidence="60">
    <location>
        <begin position="2799"/>
        <end position="2804"/>
    </location>
</feature>
<feature type="helix" evidence="60">
    <location>
        <begin position="2808"/>
        <end position="2819"/>
    </location>
</feature>
<feature type="helix" evidence="60">
    <location>
        <begin position="2826"/>
        <end position="2833"/>
    </location>
</feature>
<feature type="turn" evidence="60">
    <location>
        <begin position="2834"/>
        <end position="2836"/>
    </location>
</feature>
<feature type="helix" evidence="60">
    <location>
        <begin position="2838"/>
        <end position="2842"/>
    </location>
</feature>
<feature type="helix" evidence="60">
    <location>
        <begin position="2844"/>
        <end position="2854"/>
    </location>
</feature>
<feature type="strand" evidence="63">
    <location>
        <begin position="2858"/>
        <end position="2860"/>
    </location>
</feature>
<feature type="strand" evidence="60">
    <location>
        <begin position="2862"/>
        <end position="2866"/>
    </location>
</feature>
<feature type="strand" evidence="60">
    <location>
        <begin position="2869"/>
        <end position="2873"/>
    </location>
</feature>
<feature type="helix" evidence="60">
    <location>
        <begin position="2875"/>
        <end position="2877"/>
    </location>
</feature>
<feature type="helix" evidence="60">
    <location>
        <begin position="2878"/>
        <end position="2886"/>
    </location>
</feature>
<feature type="helix" evidence="60">
    <location>
        <begin position="2888"/>
        <end position="2891"/>
    </location>
</feature>
<feature type="helix" evidence="60">
    <location>
        <begin position="2898"/>
        <end position="2911"/>
    </location>
</feature>
<feature type="helix" evidence="60">
    <location>
        <begin position="2916"/>
        <end position="2933"/>
    </location>
</feature>
<feature type="helix" evidence="60">
    <location>
        <begin position="2935"/>
        <end position="2944"/>
    </location>
</feature>
<feature type="helix" evidence="60">
    <location>
        <begin position="2946"/>
        <end position="2948"/>
    </location>
</feature>
<feature type="strand" evidence="60">
    <location>
        <begin position="2949"/>
        <end position="2951"/>
    </location>
</feature>
<feature type="helix" evidence="60">
    <location>
        <begin position="2959"/>
        <end position="2962"/>
    </location>
</feature>
<feature type="turn" evidence="60">
    <location>
        <begin position="2967"/>
        <end position="2970"/>
    </location>
</feature>
<feature type="strand" evidence="68">
    <location>
        <begin position="2976"/>
        <end position="2978"/>
    </location>
</feature>
<feature type="strand" evidence="67">
    <location>
        <begin position="2980"/>
        <end position="2982"/>
    </location>
</feature>
<organism>
    <name type="scientific">Hepatitis C virus genotype 1b (isolate BK)</name>
    <name type="common">HCV</name>
    <dbReference type="NCBI Taxonomy" id="11105"/>
    <lineage>
        <taxon>Viruses</taxon>
        <taxon>Riboviria</taxon>
        <taxon>Orthornavirae</taxon>
        <taxon>Kitrinoviricota</taxon>
        <taxon>Flasuviricetes</taxon>
        <taxon>Amarillovirales</taxon>
        <taxon>Flaviviridae</taxon>
        <taxon>Hepacivirus</taxon>
        <taxon>Hepacivirus hominis</taxon>
    </lineage>
</organism>
<accession>P26663</accession>
<sequence>MSTNPKPQRKTKRNTNRRPQDVKFPGGGQIVGGVYLLPRRGPRLGVRAPRKTSERSQPRGRRQPIPKARRPEGRTWAQPGYPWPLYGNEGLGWAGWLLSPRGSRPSWGPTDPRRRSRNLGKVIDTLTCGFADLMGYIPLVGAPLGGAARALAHGVRVLEDGVNYATGNLPGCSFSIFLLALLSCLTTPASAYEVHNVSGIYHVTNDCSNASIVYEAADLIMHTPGCVPCVREGNSSRCWVALTPTLAARNVTIPTTTIRRHVDLLVGAAAFCSAMYVGDLCGSVFLVSQLFTFSPRRHVTLQDCNCSIYPGHVSGHRMAWDMMMNWSPTTALVVSQLLRIPQAVVDMVAGAHWGVLAGLAYYSMAGNWAKVLIVMLLFAGVDGDTHVTGGAQAKTTNRLVSMFASGPSQKIQLINTNGSWHINRTALNCNDSLQTGFLAALFYTHSFNSSGCPERMAQCRTIDKFDQGWGPITYAESSRSDQRPYCWHYPPPQCTIVPASEVCGPVYCFTPSPVVVGTTDRFGVPTYRWGENETDVLLLNNTRPPQGNWFGCTWMNSTGFTKTCGGPPCNIGGVGNNTLTCPTDCFRKHPEATYTKCGSGPWLTPRCMVDYPYRLWHYPCTVNFTIFKVRMYVGGVEHRLNAACNWTRGERCDLEDRDRPELSPLLLSTTEWQVLPCSFTTLPALSTGLIHLHQNIVDVQYLYGIGSAVVSFAIKWEYVLLLFLLLADARVCACLWMMLLIAQAEAALENLVVLNSASVAGAHGILSFLVFFCAAWYIKGRLVPGATYALYGVWPLLLLLLALPPRAYAMDREMAASCGGAVFVGLVLLTLSPYYKVFLARLIWWLQYFTTRAEADLHVWIPPLNARGGRDAIILLMCAVHPELIFDITKLLIAILGPLMVLQAGITRVPYFVRAQGLIHACMLVRKVAGGHYVQMAFMKLGALTGTYIYNHLTPLRDWPRAGLRDLAVAVEPVVFSDMETKIITWGADTAACGDIILGLPVSARRGKEILLGPADSLEGRGLRLLAPITAYSQQTRGLLGCIITSLTGRDKNQVEGEVQVVSTATQSFLATCVNGVCWTVYHGAGSKTLAAPKGPITQMYTNVDQDLVGWPKPPGARSLTPCTCGSSDLYLVTRHADVIPVRRRGDSRGSLLSPRPVSYLKGSSGGPLLCPFGHAVGIFRAAVCTRGVAKAVDFVPVESMETTMRSPVFTDNSSPPAVPQSFQVAHLHAPTGSGKSTKVPAAYAAQGYKVLVLNPSVAATLGFGAYMSKAHGIDPNIRTGVRTITTGAPVTYSTYGKFLADGGCSGGAYDIIICDECHSTDSTTILGIGTVLDQAETAGARLVVLATATPPGSVTVPHPNIEEVALSNTGEIPFYGKAIPIEAIRGGRHLIFCHSKKKCDELAAKLSGLGINAVAYYRGLDVSVIPTIGDVVVVATDALMTGYTGDFDSVIDCNTCVTQTVDFSLDPTFTIETTTVPQDAVSRSQRRGRTGRGRRGIYRFVTPGERPSGMFDSSVLCECYDAGCAWYELTPAETSVRLRAYLNTPGLPVCQDHLEFWESVFTGLTHIDAHFLSQTKQAGDNFPYLVAYQATVCARAQAPPPSWDQMWKCLIRLKPTLHGPTPLLYRLGAVQNEVTLTHPITKYIMACMSADLEVVTSTWVLVGGVLAALAAYCLTTGSVVIVGRIILSGRPAIVPDRELLYQEFDEMEECASHLPYIEQGMQLAEQFKQKALGLLQTATKQAEAAAPVVESKWRALETFWAKHMWNFISGIQYLAGLSTLPGNPAIASLMAFTASITSPLTTQSTLLFNILGGWVAAQLAPPSAASAFVGAGIAGAAVGSIGLGKVLVDILAGYGAGVAGALVAFKVMSGEMPSTEDLVNLLPAILSPGALVVGVVCAAILRRHVGPGEGAVQWMNRLIAFASRGNHVSPTHYVPESDAAARVTQILSSLTITQLLKRLHQWINEDCSTPCSGSWLRDVWDWICTVLTDFKTWLQSKLLPQLPGVPFFSCQRGYKGVWRGDGIMQTTCPCGAQITGHVKNGSMRIVGPKTCSNTWHGTFPINAYTTGPCTPSPAPNYSRALWRVAAEEYVEVTRVGDFHYVTGMTTDNVKCPCQVPAPEFFSEVDGVRLHRYAPACRPLLREEVTFQVGLNQYLVGSQLPCEPEPDVAVLTSMLTDPSHITAETAKRRLARGSPPSLASSSASQLSAPSLKATCTTHHVSPDADLIEANLLWRQEMGGNITRVESENKVVVLDSFDPLRAEEDEREVSVPAEILRKSKKFPAAMPIWARPDYNPPLLESWKDPDYVPPVVHGCPLPPIKAPPIPPPRRKRTVVLTESSVSSALAELATKTFGSSESSAVDSGTATALPDQASDDGDKGSDVESYSSMPPLEGEPGDPDLSDGSWSTVSEEASEDVVCCSMSYTWTGALITPCAAEESKLPINALSNSLLRHHNMVYATTSRSAGLRQKKVTFDRLQVLDDHYRDVLKEMKAKASTVKAKLLSVEEACKLTPPHSAKSKFGYGAKDVRNLSSKAVNHIHSVWKDLLEDTVTPIDTTIMAKNEVFCVQPEKGGRKPARLIVFPDLGVRVCEKMALYDVVSTLPQVVMGSSYGFQYSPGQRVEFLVNTWKSKKNPMGFSYDTRCFDSTVTENDIRVEESIYQCCDLAPEARQAIKSLTERLYIGGPLTNSKGQNCGYRRCRASGVLTTSCGNTLTCYLKASAACRAAKLQDCTMLVNGDDLVVICESAGTQEDAASLRVFTEAMTRYSAPPGDPPQPEYDLELITSCSSNVSVAHDASGKRVYYLTRDPTTPLARAAWETARHTPVNSWLGNIIMYAPTLWARMILMTHFFSILLAQEQLEKALDCQIYGACYSIEPLDLPQIIERLHGLSAFSLHSYSPGEINRVASCLRKLGVPPLRVWRHRARSVRARLLSQGGRAATCGKYLFNWAVKTKLKLTPIPAASRLDLSGWFVAGYSGGDIYHSLSRARPRWFMLCLLLLSVGVGIYLLPNR</sequence>
<name>POLG_HCVBK</name>
<organismHost>
    <name type="scientific">Homo sapiens</name>
    <name type="common">Human</name>
    <dbReference type="NCBI Taxonomy" id="9606"/>
</organismHost>
<evidence type="ECO:0000250" key="1"/>
<evidence type="ECO:0000250" key="2">
    <source>
        <dbReference type="UniProtKB" id="O92972"/>
    </source>
</evidence>
<evidence type="ECO:0000250" key="3">
    <source>
        <dbReference type="UniProtKB" id="P26662"/>
    </source>
</evidence>
<evidence type="ECO:0000250" key="4">
    <source>
        <dbReference type="UniProtKB" id="P26664"/>
    </source>
</evidence>
<evidence type="ECO:0000250" key="5">
    <source>
        <dbReference type="UniProtKB" id="P27958"/>
    </source>
</evidence>
<evidence type="ECO:0000250" key="6">
    <source>
        <dbReference type="UniProtKB" id="P29846"/>
    </source>
</evidence>
<evidence type="ECO:0000250" key="7">
    <source>
        <dbReference type="UniProtKB" id="Q01403"/>
    </source>
</evidence>
<evidence type="ECO:0000250" key="8">
    <source>
        <dbReference type="UniProtKB" id="Q03463"/>
    </source>
</evidence>
<evidence type="ECO:0000250" key="9">
    <source>
        <dbReference type="UniProtKB" id="Q5EG65"/>
    </source>
</evidence>
<evidence type="ECO:0000250" key="10">
    <source>
        <dbReference type="UniProtKB" id="Q913V3"/>
    </source>
</evidence>
<evidence type="ECO:0000250" key="11">
    <source>
        <dbReference type="UniProtKB" id="Q99IB8"/>
    </source>
</evidence>
<evidence type="ECO:0000250" key="12">
    <source>
        <dbReference type="UniProtKB" id="Q9WMX2"/>
    </source>
</evidence>
<evidence type="ECO:0000255" key="13"/>
<evidence type="ECO:0000255" key="14">
    <source>
        <dbReference type="PROSITE-ProRule" id="PRU00539"/>
    </source>
</evidence>
<evidence type="ECO:0000255" key="15">
    <source>
        <dbReference type="PROSITE-ProRule" id="PRU00541"/>
    </source>
</evidence>
<evidence type="ECO:0000255" key="16">
    <source>
        <dbReference type="PROSITE-ProRule" id="PRU01030"/>
    </source>
</evidence>
<evidence type="ECO:0000255" key="17">
    <source>
        <dbReference type="PROSITE-ProRule" id="PRU01166"/>
    </source>
</evidence>
<evidence type="ECO:0000256" key="18">
    <source>
        <dbReference type="SAM" id="MobiDB-lite"/>
    </source>
</evidence>
<evidence type="ECO:0000269" key="19">
    <source>
    </source>
</evidence>
<evidence type="ECO:0000269" key="20">
    <source>
    </source>
</evidence>
<evidence type="ECO:0000269" key="21">
    <source>
    </source>
</evidence>
<evidence type="ECO:0000269" key="22">
    <source>
    </source>
</evidence>
<evidence type="ECO:0000269" key="23">
    <source>
    </source>
</evidence>
<evidence type="ECO:0000269" key="24">
    <source>
    </source>
</evidence>
<evidence type="ECO:0000269" key="25">
    <source>
    </source>
</evidence>
<evidence type="ECO:0000269" key="26">
    <source>
    </source>
</evidence>
<evidence type="ECO:0000269" key="27">
    <source>
    </source>
</evidence>
<evidence type="ECO:0000269" key="28">
    <source>
    </source>
</evidence>
<evidence type="ECO:0000269" key="29">
    <source>
    </source>
</evidence>
<evidence type="ECO:0000269" key="30">
    <source>
    </source>
</evidence>
<evidence type="ECO:0000269" key="31">
    <source>
    </source>
</evidence>
<evidence type="ECO:0000269" key="32">
    <source>
    </source>
</evidence>
<evidence type="ECO:0000269" key="33">
    <source>
    </source>
</evidence>
<evidence type="ECO:0000269" key="34">
    <source>
    </source>
</evidence>
<evidence type="ECO:0000269" key="35">
    <source>
    </source>
</evidence>
<evidence type="ECO:0000305" key="36"/>
<evidence type="ECO:0000305" key="37">
    <source>
    </source>
</evidence>
<evidence type="ECO:0000305" key="38">
    <source>
    </source>
</evidence>
<evidence type="ECO:0000305" key="39">
    <source>
    </source>
</evidence>
<evidence type="ECO:0000305" key="40">
    <source>
    </source>
</evidence>
<evidence type="ECO:0000305" key="41">
    <source>
    </source>
</evidence>
<evidence type="ECO:0000305" key="42">
    <source>
    </source>
</evidence>
<evidence type="ECO:0007744" key="43">
    <source>
        <dbReference type="PDB" id="1A1Q"/>
    </source>
</evidence>
<evidence type="ECO:0007744" key="44">
    <source>
        <dbReference type="PDB" id="1BT7"/>
    </source>
</evidence>
<evidence type="ECO:0007744" key="45">
    <source>
        <dbReference type="PDB" id="1C2P"/>
    </source>
</evidence>
<evidence type="ECO:0007744" key="46">
    <source>
        <dbReference type="PDB" id="1CSJ"/>
    </source>
</evidence>
<evidence type="ECO:0007744" key="47">
    <source>
        <dbReference type="PDB" id="1CU1"/>
    </source>
</evidence>
<evidence type="ECO:0007744" key="48">
    <source>
        <dbReference type="PDB" id="1GX5"/>
    </source>
</evidence>
<evidence type="ECO:0007744" key="49">
    <source>
        <dbReference type="PDB" id="1GX6"/>
    </source>
</evidence>
<evidence type="ECO:0007744" key="50">
    <source>
        <dbReference type="PDB" id="1JXP"/>
    </source>
</evidence>
<evidence type="ECO:0007744" key="51">
    <source>
        <dbReference type="PDB" id="1NS3"/>
    </source>
</evidence>
<evidence type="ECO:0007744" key="52">
    <source>
        <dbReference type="PDB" id="1QUV"/>
    </source>
</evidence>
<evidence type="ECO:0007744" key="53">
    <source>
        <dbReference type="PDB" id="8OHM"/>
    </source>
</evidence>
<evidence type="ECO:0007829" key="54">
    <source>
        <dbReference type="PDB" id="1BT7"/>
    </source>
</evidence>
<evidence type="ECO:0007829" key="55">
    <source>
        <dbReference type="PDB" id="1CSJ"/>
    </source>
</evidence>
<evidence type="ECO:0007829" key="56">
    <source>
        <dbReference type="PDB" id="1CU1"/>
    </source>
</evidence>
<evidence type="ECO:0007829" key="57">
    <source>
        <dbReference type="PDB" id="1GX5"/>
    </source>
</evidence>
<evidence type="ECO:0007829" key="58">
    <source>
        <dbReference type="PDB" id="1GX6"/>
    </source>
</evidence>
<evidence type="ECO:0007829" key="59">
    <source>
        <dbReference type="PDB" id="1JXP"/>
    </source>
</evidence>
<evidence type="ECO:0007829" key="60">
    <source>
        <dbReference type="PDB" id="2GIQ"/>
    </source>
</evidence>
<evidence type="ECO:0007829" key="61">
    <source>
        <dbReference type="PDB" id="2HWI"/>
    </source>
</evidence>
<evidence type="ECO:0007829" key="62">
    <source>
        <dbReference type="PDB" id="2WRM"/>
    </source>
</evidence>
<evidence type="ECO:0007829" key="63">
    <source>
        <dbReference type="PDB" id="3BSA"/>
    </source>
</evidence>
<evidence type="ECO:0007829" key="64">
    <source>
        <dbReference type="PDB" id="3CVK"/>
    </source>
</evidence>
<evidence type="ECO:0007829" key="65">
    <source>
        <dbReference type="PDB" id="4B76"/>
    </source>
</evidence>
<evidence type="ECO:0007829" key="66">
    <source>
        <dbReference type="PDB" id="4DGY"/>
    </source>
</evidence>
<evidence type="ECO:0007829" key="67">
    <source>
        <dbReference type="PDB" id="4EO6"/>
    </source>
</evidence>
<evidence type="ECO:0007829" key="68">
    <source>
        <dbReference type="PDB" id="4KE5"/>
    </source>
</evidence>
<evidence type="ECO:0007829" key="69">
    <source>
        <dbReference type="PDB" id="4WXP"/>
    </source>
</evidence>
<evidence type="ECO:0007829" key="70">
    <source>
        <dbReference type="PDB" id="8OHM"/>
    </source>
</evidence>
<keyword id="KW-0002">3D-structure</keyword>
<keyword id="KW-0007">Acetylation</keyword>
<keyword id="KW-1072">Activation of host autophagy by virus</keyword>
<keyword id="KW-0053">Apoptosis</keyword>
<keyword id="KW-0067">ATP-binding</keyword>
<keyword id="KW-0167">Capsid protein</keyword>
<keyword id="KW-1165">Clathrin-mediated endocytosis of virus by host</keyword>
<keyword id="KW-0903">Direct protein sequencing</keyword>
<keyword id="KW-1015">Disulfide bond</keyword>
<keyword id="KW-1170">Fusion of virus membrane with host endosomal membrane</keyword>
<keyword id="KW-1168">Fusion of virus membrane with host membrane</keyword>
<keyword id="KW-1078">G1/S host cell cycle checkpoint dysregulation by virus</keyword>
<keyword id="KW-0325">Glycoprotein</keyword>
<keyword id="KW-0347">Helicase</keyword>
<keyword id="KW-1032">Host cell membrane</keyword>
<keyword id="KW-1035">Host cytoplasm</keyword>
<keyword id="KW-1038">Host endoplasmic reticulum</keyword>
<keyword id="KW-1041">Host lipid droplet</keyword>
<keyword id="KW-1043">Host membrane</keyword>
<keyword id="KW-1045">Host mitochondrion</keyword>
<keyword id="KW-1048">Host nucleus</keyword>
<keyword id="KW-0945">Host-virus interaction</keyword>
<keyword id="KW-0378">Hydrolase</keyword>
<keyword id="KW-1090">Inhibition of host innate immune response by virus</keyword>
<keyword id="KW-1114">Inhibition of host interferon signaling pathway by virus</keyword>
<keyword id="KW-1097">Inhibition of host MAVS by virus</keyword>
<keyword id="KW-1113">Inhibition of host RLR pathway by virus</keyword>
<keyword id="KW-1105">Inhibition of host STAT1 by virus</keyword>
<keyword id="KW-1110">Inhibition of host TRAFs by virus</keyword>
<keyword id="KW-0922">Interferon antiviral system evasion</keyword>
<keyword id="KW-0407">Ion channel</keyword>
<keyword id="KW-0406">Ion transport</keyword>
<keyword id="KW-1017">Isopeptide bond</keyword>
<keyword id="KW-0449">Lipoprotein</keyword>
<keyword id="KW-0460">Magnesium</keyword>
<keyword id="KW-0472">Membrane</keyword>
<keyword id="KW-0479">Metal-binding</keyword>
<keyword id="KW-1121">Modulation of host cell cycle by virus</keyword>
<keyword id="KW-0511">Multifunctional enzyme</keyword>
<keyword id="KW-0547">Nucleotide-binding</keyword>
<keyword id="KW-0548">Nucleotidyltransferase</keyword>
<keyword id="KW-0553">Oncogene</keyword>
<keyword id="KW-0564">Palmitate</keyword>
<keyword id="KW-0597">Phosphoprotein</keyword>
<keyword id="KW-0645">Protease</keyword>
<keyword id="KW-0687">Ribonucleoprotein</keyword>
<keyword id="KW-0694">RNA-binding</keyword>
<keyword id="KW-0696">RNA-directed RNA polymerase</keyword>
<keyword id="KW-0720">Serine protease</keyword>
<keyword id="KW-0729">SH3-binding</keyword>
<keyword id="KW-0788">Thiol protease</keyword>
<keyword id="KW-0804">Transcription</keyword>
<keyword id="KW-0805">Transcription regulation</keyword>
<keyword id="KW-0808">Transferase</keyword>
<keyword id="KW-0812">Transmembrane</keyword>
<keyword id="KW-1133">Transmembrane helix</keyword>
<keyword id="KW-0813">Transport</keyword>
<keyword id="KW-0832">Ubl conjugation</keyword>
<keyword id="KW-1161">Viral attachment to host cell</keyword>
<keyword id="KW-0261">Viral envelope protein</keyword>
<keyword id="KW-0899">Viral immunoevasion</keyword>
<keyword id="KW-1182">Viral ion channel</keyword>
<keyword id="KW-0543">Viral nucleoprotein</keyword>
<keyword id="KW-1162">Viral penetration into host cytoplasm</keyword>
<keyword id="KW-0693">Viral RNA replication</keyword>
<keyword id="KW-0946">Virion</keyword>
<keyword id="KW-1164">Virus endocytosis by host</keyword>
<keyword id="KW-1160">Virus entry into host cell</keyword>
<keyword id="KW-0862">Zinc</keyword>